<organism>
    <name type="scientific">Homo sapiens</name>
    <name type="common">Human</name>
    <dbReference type="NCBI Taxonomy" id="9606"/>
    <lineage>
        <taxon>Eukaryota</taxon>
        <taxon>Metazoa</taxon>
        <taxon>Chordata</taxon>
        <taxon>Craniata</taxon>
        <taxon>Vertebrata</taxon>
        <taxon>Euteleostomi</taxon>
        <taxon>Mammalia</taxon>
        <taxon>Eutheria</taxon>
        <taxon>Euarchontoglires</taxon>
        <taxon>Primates</taxon>
        <taxon>Haplorrhini</taxon>
        <taxon>Catarrhini</taxon>
        <taxon>Hominidae</taxon>
        <taxon>Homo</taxon>
    </lineage>
</organism>
<name>CASP3_HUMAN</name>
<accession>P42574</accession>
<accession>A8K5M2</accession>
<accession>D3DP53</accession>
<accession>Q96AN1</accession>
<accession>Q96KP2</accession>
<gene>
    <name type="primary">CASP3</name>
    <name evidence="33" type="synonym">CPP32</name>
</gene>
<proteinExistence type="evidence at protein level"/>
<reference key="1">
    <citation type="journal article" date="1994" name="J. Biol. Chem.">
        <title>CPP32, a novel human apoptotic protein with homology to Caenorhabditis elegans cell death protein Ced-3 and mammalian interleukin-1 beta-converting enzyme.</title>
        <authorList>
            <person name="Fernandes-Alnemri T."/>
            <person name="Litwack G."/>
            <person name="Alnemri E.S."/>
        </authorList>
    </citation>
    <scope>NUCLEOTIDE SEQUENCE [MRNA]</scope>
    <scope>VARIANT ASP-190</scope>
    <scope>TISSUE SPECIFICITY</scope>
    <source>
        <tissue>T-cell</tissue>
    </source>
</reference>
<reference key="2">
    <citation type="journal article" date="1995" name="Cell">
        <title>Yama/CPP32 beta, a mammalian homolog of CED-3, is a CrmA-inhibitable protease that cleaves the death substrate poly(ADP-ribose) polymerase.</title>
        <authorList>
            <person name="Tewari M."/>
            <person name="Quan L.T."/>
            <person name="O'Rourke K."/>
            <person name="Desnoyers S."/>
            <person name="Zeng Z."/>
            <person name="Beidler D.R."/>
            <person name="Poirier G.G."/>
            <person name="Salvesen G.S."/>
            <person name="Dixit V.M."/>
        </authorList>
    </citation>
    <scope>NUCLEOTIDE SEQUENCE [MRNA]</scope>
    <scope>FUNCTION</scope>
</reference>
<reference key="3">
    <citation type="journal article" date="2004" name="Biochem. Biophys. Res. Commun.">
        <title>Caspase 3 activation is controlled by a sequence located in the N-terminus of its large subunit.</title>
        <authorList>
            <person name="Pelletier M."/>
            <person name="Cartron P.F."/>
            <person name="Delaval F."/>
            <person name="Meflah K."/>
            <person name="Vallette F.M."/>
            <person name="Oliver L."/>
        </authorList>
    </citation>
    <scope>NUCLEOTIDE SEQUENCE [MRNA]</scope>
    <scope>SUBCELLULAR LOCATION</scope>
    <scope>VARIANT ASP-190</scope>
</reference>
<reference key="4">
    <citation type="journal article" date="2004" name="Nat. Genet.">
        <title>Complete sequencing and characterization of 21,243 full-length human cDNAs.</title>
        <authorList>
            <person name="Ota T."/>
            <person name="Suzuki Y."/>
            <person name="Nishikawa T."/>
            <person name="Otsuki T."/>
            <person name="Sugiyama T."/>
            <person name="Irie R."/>
            <person name="Wakamatsu A."/>
            <person name="Hayashi K."/>
            <person name="Sato H."/>
            <person name="Nagai K."/>
            <person name="Kimura K."/>
            <person name="Makita H."/>
            <person name="Sekine M."/>
            <person name="Obayashi M."/>
            <person name="Nishi T."/>
            <person name="Shibahara T."/>
            <person name="Tanaka T."/>
            <person name="Ishii S."/>
            <person name="Yamamoto J."/>
            <person name="Saito K."/>
            <person name="Kawai Y."/>
            <person name="Isono Y."/>
            <person name="Nakamura Y."/>
            <person name="Nagahari K."/>
            <person name="Murakami K."/>
            <person name="Yasuda T."/>
            <person name="Iwayanagi T."/>
            <person name="Wagatsuma M."/>
            <person name="Shiratori A."/>
            <person name="Sudo H."/>
            <person name="Hosoiri T."/>
            <person name="Kaku Y."/>
            <person name="Kodaira H."/>
            <person name="Kondo H."/>
            <person name="Sugawara M."/>
            <person name="Takahashi M."/>
            <person name="Kanda K."/>
            <person name="Yokoi T."/>
            <person name="Furuya T."/>
            <person name="Kikkawa E."/>
            <person name="Omura Y."/>
            <person name="Abe K."/>
            <person name="Kamihara K."/>
            <person name="Katsuta N."/>
            <person name="Sato K."/>
            <person name="Tanikawa M."/>
            <person name="Yamazaki M."/>
            <person name="Ninomiya K."/>
            <person name="Ishibashi T."/>
            <person name="Yamashita H."/>
            <person name="Murakawa K."/>
            <person name="Fujimori K."/>
            <person name="Tanai H."/>
            <person name="Kimata M."/>
            <person name="Watanabe M."/>
            <person name="Hiraoka S."/>
            <person name="Chiba Y."/>
            <person name="Ishida S."/>
            <person name="Ono Y."/>
            <person name="Takiguchi S."/>
            <person name="Watanabe S."/>
            <person name="Yosida M."/>
            <person name="Hotuta T."/>
            <person name="Kusano J."/>
            <person name="Kanehori K."/>
            <person name="Takahashi-Fujii A."/>
            <person name="Hara H."/>
            <person name="Tanase T.-O."/>
            <person name="Nomura Y."/>
            <person name="Togiya S."/>
            <person name="Komai F."/>
            <person name="Hara R."/>
            <person name="Takeuchi K."/>
            <person name="Arita M."/>
            <person name="Imose N."/>
            <person name="Musashino K."/>
            <person name="Yuuki H."/>
            <person name="Oshima A."/>
            <person name="Sasaki N."/>
            <person name="Aotsuka S."/>
            <person name="Yoshikawa Y."/>
            <person name="Matsunawa H."/>
            <person name="Ichihara T."/>
            <person name="Shiohata N."/>
            <person name="Sano S."/>
            <person name="Moriya S."/>
            <person name="Momiyama H."/>
            <person name="Satoh N."/>
            <person name="Takami S."/>
            <person name="Terashima Y."/>
            <person name="Suzuki O."/>
            <person name="Nakagawa S."/>
            <person name="Senoh A."/>
            <person name="Mizoguchi H."/>
            <person name="Goto Y."/>
            <person name="Shimizu F."/>
            <person name="Wakebe H."/>
            <person name="Hishigaki H."/>
            <person name="Watanabe T."/>
            <person name="Sugiyama A."/>
            <person name="Takemoto M."/>
            <person name="Kawakami B."/>
            <person name="Yamazaki M."/>
            <person name="Watanabe K."/>
            <person name="Kumagai A."/>
            <person name="Itakura S."/>
            <person name="Fukuzumi Y."/>
            <person name="Fujimori Y."/>
            <person name="Komiyama M."/>
            <person name="Tashiro H."/>
            <person name="Tanigami A."/>
            <person name="Fujiwara T."/>
            <person name="Ono T."/>
            <person name="Yamada K."/>
            <person name="Fujii Y."/>
            <person name="Ozaki K."/>
            <person name="Hirao M."/>
            <person name="Ohmori Y."/>
            <person name="Kawabata A."/>
            <person name="Hikiji T."/>
            <person name="Kobatake N."/>
            <person name="Inagaki H."/>
            <person name="Ikema Y."/>
            <person name="Okamoto S."/>
            <person name="Okitani R."/>
            <person name="Kawakami T."/>
            <person name="Noguchi S."/>
            <person name="Itoh T."/>
            <person name="Shigeta K."/>
            <person name="Senba T."/>
            <person name="Matsumura K."/>
            <person name="Nakajima Y."/>
            <person name="Mizuno T."/>
            <person name="Morinaga M."/>
            <person name="Sasaki M."/>
            <person name="Togashi T."/>
            <person name="Oyama M."/>
            <person name="Hata H."/>
            <person name="Watanabe M."/>
            <person name="Komatsu T."/>
            <person name="Mizushima-Sugano J."/>
            <person name="Satoh T."/>
            <person name="Shirai Y."/>
            <person name="Takahashi Y."/>
            <person name="Nakagawa K."/>
            <person name="Okumura K."/>
            <person name="Nagase T."/>
            <person name="Nomura N."/>
            <person name="Kikuchi H."/>
            <person name="Masuho Y."/>
            <person name="Yamashita R."/>
            <person name="Nakai K."/>
            <person name="Yada T."/>
            <person name="Nakamura Y."/>
            <person name="Ohara O."/>
            <person name="Isogai T."/>
            <person name="Sugano S."/>
        </authorList>
    </citation>
    <scope>NUCLEOTIDE SEQUENCE [LARGE SCALE MRNA]</scope>
    <source>
        <tissue>Tongue</tissue>
    </source>
</reference>
<reference key="5">
    <citation type="submission" date="2003-01" db="EMBL/GenBank/DDBJ databases">
        <authorList>
            <consortium name="NIEHS SNPs program"/>
        </authorList>
    </citation>
    <scope>NUCLEOTIDE SEQUENCE [GENOMIC DNA]</scope>
</reference>
<reference key="6">
    <citation type="submission" date="2005-09" db="EMBL/GenBank/DDBJ databases">
        <authorList>
            <person name="Mural R.J."/>
            <person name="Istrail S."/>
            <person name="Sutton G.G."/>
            <person name="Florea L."/>
            <person name="Halpern A.L."/>
            <person name="Mobarry C.M."/>
            <person name="Lippert R."/>
            <person name="Walenz B."/>
            <person name="Shatkay H."/>
            <person name="Dew I."/>
            <person name="Miller J.R."/>
            <person name="Flanigan M.J."/>
            <person name="Edwards N.J."/>
            <person name="Bolanos R."/>
            <person name="Fasulo D."/>
            <person name="Halldorsson B.V."/>
            <person name="Hannenhalli S."/>
            <person name="Turner R."/>
            <person name="Yooseph S."/>
            <person name="Lu F."/>
            <person name="Nusskern D.R."/>
            <person name="Shue B.C."/>
            <person name="Zheng X.H."/>
            <person name="Zhong F."/>
            <person name="Delcher A.L."/>
            <person name="Huson D.H."/>
            <person name="Kravitz S.A."/>
            <person name="Mouchard L."/>
            <person name="Reinert K."/>
            <person name="Remington K.A."/>
            <person name="Clark A.G."/>
            <person name="Waterman M.S."/>
            <person name="Eichler E.E."/>
            <person name="Adams M.D."/>
            <person name="Hunkapiller M.W."/>
            <person name="Myers E.W."/>
            <person name="Venter J.C."/>
        </authorList>
    </citation>
    <scope>NUCLEOTIDE SEQUENCE [LARGE SCALE GENOMIC DNA]</scope>
</reference>
<reference key="7">
    <citation type="journal article" date="2004" name="Genome Res.">
        <title>The status, quality, and expansion of the NIH full-length cDNA project: the Mammalian Gene Collection (MGC).</title>
        <authorList>
            <consortium name="The MGC Project Team"/>
        </authorList>
    </citation>
    <scope>NUCLEOTIDE SEQUENCE [LARGE SCALE MRNA]</scope>
    <source>
        <tissue>Lymph</tissue>
    </source>
</reference>
<reference key="8">
    <citation type="journal article" date="1995" name="Nature">
        <title>Identification and inhibition of the ICE/CED-3 protease necessary for mammalian apoptosis.</title>
        <authorList>
            <person name="Nicholson D.W."/>
            <person name="Ali A."/>
            <person name="Thornberry N.A."/>
            <person name="Vaillancourt J.P."/>
            <person name="Ding C.K."/>
            <person name="Gallant M."/>
            <person name="Gareau Y."/>
            <person name="Griffin P.R."/>
            <person name="Labelle M."/>
            <person name="Lazebnik Y.A."/>
            <person name="Munday N.A."/>
            <person name="Raju S.M."/>
            <person name="Smulson M.E."/>
            <person name="Yamin T.-T."/>
            <person name="Li V.L."/>
            <person name="Miller D.K."/>
        </authorList>
    </citation>
    <scope>PROTEIN SEQUENCE OF 29-46 AND 176-193</scope>
    <scope>FUNCTION</scope>
    <scope>CATALYTIC ACTIVITY</scope>
    <scope>VARIANT ASP-190</scope>
</reference>
<reference key="9">
    <citation type="journal article" date="1996" name="Proc. Natl. Acad. Sci. U.S.A.">
        <title>In vitro activation of CPP32 and Mch3 by Mch4, a novel human apoptotic cysteine protease containing two FADD-like domains.</title>
        <authorList>
            <person name="Fernandes-Alnemri T."/>
            <person name="Armstrong R.C."/>
            <person name="Krebs J.F."/>
            <person name="Srinivasula S.M."/>
            <person name="Wang L."/>
            <person name="Bullrich F."/>
            <person name="Fritz L.C."/>
            <person name="Trapani J.A."/>
            <person name="Tomaselli K.J."/>
            <person name="Litwack G."/>
            <person name="Alnemri E.S."/>
        </authorList>
    </citation>
    <scope>PROTEOLYTIC PROCESSING</scope>
</reference>
<reference key="10">
    <citation type="journal article" date="1996" name="Nat. Genet.">
        <title>Cleavage of huntingtin by apopain, a proapoptotic cysteine protease, is modulated by the polyglutamine tract.</title>
        <authorList>
            <person name="Goldberg Y.P."/>
            <person name="Nicholson D.W."/>
            <person name="Rasper D.M."/>
            <person name="Kalchman M.A."/>
            <person name="Koide H.B."/>
            <person name="Graham R.K."/>
            <person name="Bromm M."/>
            <person name="Kazemi-Esfarjani P."/>
            <person name="Thornberry N.A."/>
            <person name="Vaillancourt J.P."/>
            <person name="Hayden M.R."/>
        </authorList>
    </citation>
    <scope>CLEAVAGE OF HUNTINGTIN</scope>
    <scope>FUNCTION</scope>
</reference>
<reference key="11">
    <citation type="journal article" date="1997" name="J. Biol. Chem.">
        <title>Involvement of caspase-1 and caspase-3 in the production and processing of mature human interleukin 18 in monocytic THP.1 cells.</title>
        <authorList>
            <person name="Akita K."/>
            <person name="Ohtsuki T."/>
            <person name="Nukada Y."/>
            <person name="Tanimoto T."/>
            <person name="Namba M."/>
            <person name="Okura T."/>
            <person name="Takakura-Yamamoto R."/>
            <person name="Torigoe K."/>
            <person name="Gu Y."/>
            <person name="Su M.S."/>
            <person name="Fujii M."/>
            <person name="Satoh-Itoh M."/>
            <person name="Yamamoto K."/>
            <person name="Kohno K."/>
            <person name="Ikeda M."/>
            <person name="Kurimoto M."/>
        </authorList>
    </citation>
    <scope>FUNCTION</scope>
    <scope>CATALYTIC ACTIVITY</scope>
</reference>
<reference key="12">
    <citation type="journal article" date="1999" name="J. Biol. Chem.">
        <title>Cleavage of automodified poly(ADP-ribose) polymerase during apoptosis. Evidence for involvement of caspase-7.</title>
        <authorList>
            <person name="Germain M."/>
            <person name="Affar E.B."/>
            <person name="D'Amours D."/>
            <person name="Dixit V.M."/>
            <person name="Salvesen G.S."/>
            <person name="Poirier G.G."/>
        </authorList>
    </citation>
    <scope>FUNCTION</scope>
</reference>
<reference key="13">
    <citation type="journal article" date="1999" name="Science">
        <title>Fas-induced caspase denitrosylation.</title>
        <authorList>
            <person name="Mannick J.B."/>
            <person name="Hausladen A."/>
            <person name="Liu L."/>
            <person name="Hess D.T."/>
            <person name="Zeng M."/>
            <person name="Miao Q.X."/>
            <person name="Kane L.S."/>
            <person name="Gow A.J."/>
            <person name="Stamler J.S."/>
        </authorList>
    </citation>
    <scope>S-NITROSYLATION AT CYS-163</scope>
</reference>
<reference key="14">
    <citation type="journal article" date="2004" name="Mol. Cell">
        <title>Dual role of BRUCE as an antiapoptotic IAP and a chimeric E2/E3 ubiquitin ligase.</title>
        <authorList>
            <person name="Bartke T."/>
            <person name="Pohl C."/>
            <person name="Pyrowolakis G."/>
            <person name="Jentsch S."/>
        </authorList>
    </citation>
    <scope>INTERACTION WITH BIRC6/BRUCE</scope>
</reference>
<reference key="15">
    <citation type="journal article" date="2006" name="Apoptosis">
        <title>Nuclear caspase-3 and caspase-7 activation, and poly(ADP-ribose) polymerase cleavage are early events in camptothecin-induced apoptosis.</title>
        <authorList>
            <person name="Rodriguez-Hernandez A."/>
            <person name="Brea-Calvo G."/>
            <person name="Fernandez-Ayala D.J."/>
            <person name="Cordero M."/>
            <person name="Navas P."/>
            <person name="Sanchez-Alcazar J.A."/>
        </authorList>
    </citation>
    <scope>FUNCTION</scope>
    <scope>CATALYTIC ACTIVITY</scope>
</reference>
<reference key="16">
    <citation type="journal article" date="2008" name="Proc. Natl. Acad. Sci. U.S.A.">
        <title>Executioner caspase-3 and caspase-7 are functionally distinct proteases.</title>
        <authorList>
            <person name="Walsh J.G."/>
            <person name="Cullen S.P."/>
            <person name="Sheridan C."/>
            <person name="Luethi A.U."/>
            <person name="Gerner C."/>
            <person name="Martin S.J."/>
        </authorList>
    </citation>
    <scope>FUNCTION</scope>
    <scope>CATALYTIC ACTIVITY</scope>
</reference>
<reference key="17">
    <citation type="journal article" date="2009" name="Anal. Chem.">
        <title>Lys-N and trypsin cover complementary parts of the phosphoproteome in a refined SCX-based approach.</title>
        <authorList>
            <person name="Gauci S."/>
            <person name="Helbig A.O."/>
            <person name="Slijper M."/>
            <person name="Krijgsveld J."/>
            <person name="Heck A.J."/>
            <person name="Mohammed S."/>
        </authorList>
    </citation>
    <scope>ACETYLATION [LARGE SCALE ANALYSIS] AT MET-1</scope>
    <scope>IDENTIFICATION BY MASS SPECTROMETRY [LARGE SCALE ANALYSIS]</scope>
</reference>
<reference key="18">
    <citation type="journal article" date="2010" name="J. Biol. Chem.">
        <title>Identification of functional regions defining different activity in caspase-3 and caspase-7 within cells.</title>
        <authorList>
            <person name="Nakatsumi H."/>
            <person name="Yonehara S."/>
        </authorList>
    </citation>
    <scope>FUNCTION</scope>
    <scope>CATALYTIC ACTIVITY</scope>
    <scope>SUBUNIT</scope>
</reference>
<reference key="19">
    <citation type="journal article" date="2011" name="BMC Syst. Biol.">
        <title>Initial characterization of the human central proteome.</title>
        <authorList>
            <person name="Burkard T.R."/>
            <person name="Planyavsky M."/>
            <person name="Kaupe I."/>
            <person name="Breitwieser F.P."/>
            <person name="Buerckstuemmer T."/>
            <person name="Bennett K.L."/>
            <person name="Superti-Furga G."/>
            <person name="Colinge J."/>
        </authorList>
    </citation>
    <scope>IDENTIFICATION BY MASS SPECTROMETRY [LARGE SCALE ANALYSIS]</scope>
</reference>
<reference key="20">
    <citation type="journal article" date="2011" name="J. Biol. Chem.">
        <title>RET modulates cell adhesion via its cleavage by caspase in sympathetic neurons.</title>
        <authorList>
            <person name="Cabrera J.R."/>
            <person name="Bouzas-Rodriguez J."/>
            <person name="Tauszig-Delamasure S."/>
            <person name="Mehlen P."/>
        </authorList>
    </citation>
    <scope>FUNCTION IN CELL ADHESION</scope>
</reference>
<reference key="21">
    <citation type="journal article" date="2012" name="Mol. Cell. Proteomics">
        <title>Comparative large-scale characterisation of plant vs. mammal proteins reveals similar and idiosyncratic N-alpha acetylation features.</title>
        <authorList>
            <person name="Bienvenut W.V."/>
            <person name="Sumpton D."/>
            <person name="Martinez A."/>
            <person name="Lilla S."/>
            <person name="Espagne C."/>
            <person name="Meinnel T."/>
            <person name="Giglione C."/>
        </authorList>
    </citation>
    <scope>ACETYLATION [LARGE SCALE ANALYSIS] AT MET-1</scope>
    <scope>IDENTIFICATION BY MASS SPECTROMETRY [LARGE SCALE ANALYSIS]</scope>
</reference>
<reference key="22">
    <citation type="journal article" date="2012" name="PLoS ONE">
        <title>OGDHL is a modifier of AKT-dependent signaling and NF-kappaB function.</title>
        <authorList>
            <person name="Sen T."/>
            <person name="Sen N."/>
            <person name="Noordhuis M.G."/>
            <person name="Ravi R."/>
            <person name="Wu T.C."/>
            <person name="Ha P.K."/>
            <person name="Sidransky D."/>
            <person name="Hoque M.O."/>
        </authorList>
    </citation>
    <scope>FUNCTION</scope>
    <scope>CATALYTIC ACTIVITY</scope>
</reference>
<reference key="23">
    <citation type="journal article" date="2013" name="J. Proteome Res.">
        <title>Toward a comprehensive characterization of a human cancer cell phosphoproteome.</title>
        <authorList>
            <person name="Zhou H."/>
            <person name="Di Palma S."/>
            <person name="Preisinger C."/>
            <person name="Peng M."/>
            <person name="Polat A.N."/>
            <person name="Heck A.J."/>
            <person name="Mohammed S."/>
        </authorList>
    </citation>
    <scope>PHOSPHORYLATION [LARGE SCALE ANALYSIS] AT SER-26</scope>
    <scope>IDENTIFICATION BY MASS SPECTROMETRY [LARGE SCALE ANALYSIS]</scope>
    <source>
        <tissue>Cervix carcinoma</tissue>
        <tissue>Erythroleukemia</tissue>
    </source>
</reference>
<reference key="24">
    <citation type="journal article" date="2013" name="Science">
        <title>Xk-Related protein 8 and CED-8 promote phosphatidylserine exposure in apoptotic cells.</title>
        <authorList>
            <person name="Suzuki J."/>
            <person name="Denning D.P."/>
            <person name="Imanishi E."/>
            <person name="Horvitz H.R."/>
            <person name="Nagata S."/>
        </authorList>
    </citation>
    <scope>FUNCTION</scope>
    <scope>CATALYTIC ACTIVITY</scope>
</reference>
<reference key="25">
    <citation type="journal article" date="2017" name="Nature">
        <title>Chemotherapy drugs induce pyroptosis through caspase-3 cleavage of a gasdermin.</title>
        <authorList>
            <person name="Wang Y."/>
            <person name="Gao W."/>
            <person name="Shi X."/>
            <person name="Ding J."/>
            <person name="Liu W."/>
            <person name="He H."/>
            <person name="Wang K."/>
            <person name="Shao F."/>
        </authorList>
    </citation>
    <scope>FUNCTION</scope>
</reference>
<reference key="26">
    <citation type="journal article" date="2017" name="Nat. Commun.">
        <title>Cleavage of DFNA5 by caspase-3 during apoptosis mediates progression to secondary necrotic/pyroptotic cell death.</title>
        <authorList>
            <person name="Rogers C."/>
            <person name="Fernandes-Alnemri T."/>
            <person name="Mayes L."/>
            <person name="Alnemri D."/>
            <person name="Cingolani G."/>
            <person name="Alnemri E.S."/>
        </authorList>
    </citation>
    <scope>FUNCTION</scope>
</reference>
<reference key="27">
    <citation type="journal article" date="2019" name="Mol. Cell">
        <title>Apoptotic caspases suppress type i interferon production via the cleavage of cGAS, MAVS, and IRF3.</title>
        <authorList>
            <person name="Ning X."/>
            <person name="Wang Y."/>
            <person name="Jing M."/>
            <person name="Sha M."/>
            <person name="Lv M."/>
            <person name="Gao P."/>
            <person name="Zhang R."/>
            <person name="Huang X."/>
            <person name="Feng J.M."/>
            <person name="Jiang Z."/>
        </authorList>
    </citation>
    <scope>FUNCTION</scope>
    <scope>CATALYTIC ACTIVITY</scope>
</reference>
<reference key="28">
    <citation type="journal article" date="2021" name="Mol. Cell">
        <title>Caspase cleavage releases a nuclear protein fragment that stimulates phospholipid scrambling at the plasma membrane.</title>
        <authorList>
            <person name="Maruoka M."/>
            <person name="Zhang P."/>
            <person name="Mori H."/>
            <person name="Imanishi E."/>
            <person name="Packwood D.M."/>
            <person name="Harada H."/>
            <person name="Kosako H."/>
            <person name="Suzuki J."/>
        </authorList>
    </citation>
    <scope>FUNCTION</scope>
    <scope>CATALYTIC ACTIVITY</scope>
</reference>
<reference key="29">
    <citation type="journal article" date="2022" name="MBio">
        <title>Calmodulin binding activates chromobacterium CopC effector to ADP-riboxanate host apoptotic caspases.</title>
        <authorList>
            <person name="Liu Y."/>
            <person name="Zeng H."/>
            <person name="Hou Y."/>
            <person name="Li Z."/>
            <person name="Li L."/>
            <person name="Song X."/>
            <person name="Ding J."/>
            <person name="Shao F."/>
            <person name="Xu Y."/>
        </authorList>
    </citation>
    <scope>FUNCTION</scope>
    <scope>PROTEOLYTIC CLEAVAGE</scope>
    <scope>ADP-RIBOXANATION AT ARG-207 (MICROBIAL INFECTION)</scope>
    <scope>MUTAGENESIS OF ARG-207</scope>
</reference>
<reference key="30">
    <citation type="journal article" date="2022" name="Mol. Cell">
        <title>Pathogen hijacks programmed cell death signaling by arginine ADPR-deacylization of caspases.</title>
        <authorList>
            <person name="Peng T."/>
            <person name="Tao X."/>
            <person name="Xia Z."/>
            <person name="Hu S."/>
            <person name="Xue J."/>
            <person name="Zhu Q."/>
            <person name="Pan X."/>
            <person name="Zhang Q."/>
            <person name="Li S."/>
        </authorList>
    </citation>
    <scope>FUNCTION</scope>
    <scope>PROTEOLYTIC CLEAVAGE</scope>
    <scope>ADP-RIBOXANATION AT ARG-207 (MICROBIAL INFECTION)</scope>
</reference>
<reference key="31">
    <citation type="journal article" date="2023" name="Nature">
        <title>Recognition and maturation of IL-18 by caspase-4 noncanonical inflammasome.</title>
        <authorList>
            <person name="Shi X."/>
            <person name="Sun Q."/>
            <person name="Hou Y."/>
            <person name="Zeng H."/>
            <person name="Cao Y."/>
            <person name="Dong M."/>
            <person name="Ding J."/>
            <person name="Shao F."/>
        </authorList>
    </citation>
    <scope>FUNCTION</scope>
    <scope>CATALYTIC ACTIVITY</scope>
</reference>
<reference key="32">
    <citation type="journal article" date="2023" name="Science">
        <title>Structures of BIRC6-client complexes provide a mechanism of SMAC-mediated release of caspases.</title>
        <authorList>
            <person name="Hunkeler M."/>
            <person name="Jin C.Y."/>
            <person name="Fischer E.S."/>
        </authorList>
    </citation>
    <scope>FUNCTION</scope>
    <scope>ACTIVITY REGULATION</scope>
    <scope>UBIQUITINATION BY BIRC6</scope>
</reference>
<reference key="33">
    <citation type="journal article" date="2023" name="Science">
        <title>Structural basis for SMAC-mediated antagonism of caspase inhibition by the giant ubiquitin ligase BIRC6.</title>
        <authorList>
            <person name="Dietz L."/>
            <person name="Ellison C.J."/>
            <person name="Riechmann C."/>
            <person name="Cassidy C.K."/>
            <person name="Felfoldi F.D."/>
            <person name="Pinto-Fernandez A."/>
            <person name="Kessler B.M."/>
            <person name="Elliott P.R."/>
        </authorList>
    </citation>
    <scope>FUNCTION</scope>
    <scope>ACTIVITY REGULATION</scope>
    <scope>UBIQUITINATION BY BIRC6</scope>
</reference>
<reference key="34">
    <citation type="journal article" date="1996" name="Nat. Struct. Biol.">
        <title>The three-dimensional structure of apopain/CPP32, a key mediator of apoptosis.</title>
        <authorList>
            <person name="Rotonda J."/>
            <person name="Nicholson D.W."/>
            <person name="Fazil K.M."/>
            <person name="Gallant M."/>
            <person name="Gareau Y."/>
            <person name="Labelle M."/>
            <person name="Peterson E.P."/>
            <person name="Rasper D.M."/>
            <person name="Ruel R."/>
            <person name="Vaillancourt J.P."/>
            <person name="Thornberry N.A."/>
            <person name="Becker J.W."/>
        </authorList>
    </citation>
    <scope>X-RAY CRYSTALLOGRAPHY (2.5 ANGSTROMS) OF 28-277</scope>
</reference>
<reference key="35">
    <citation type="journal article" date="1997" name="J. Biol. Chem.">
        <title>Structure of recombinant human CPP32 in complex with the tetrapeptide acetyl-Asp-Val-Ala-Asp fluoromethyl ketone.</title>
        <authorList>
            <person name="Mittl P.R.E."/>
            <person name="di Marco S."/>
            <person name="Krebs J.F."/>
            <person name="Bai X."/>
            <person name="Karanewsky D.S."/>
            <person name="Priestle J.P."/>
            <person name="Tomaselli K.J."/>
            <person name="Gruetter M.G."/>
        </authorList>
    </citation>
    <scope>X-RAY CRYSTALLOGRAPHY (2.3 ANGSTROMS) OF 35-173 AND 185-277</scope>
</reference>
<reference key="36">
    <citation type="journal article" date="2000" name="J. Biol. Chem.">
        <title>Potent and selective nonpeptide inhibitors of caspases 3 and 7 inhibit apoptosis and maintain cell functionality.</title>
        <authorList>
            <person name="Lee D."/>
            <person name="Long S.A."/>
            <person name="Adams J.L."/>
            <person name="Chan G."/>
            <person name="Vaidya K.S."/>
            <person name="Francis T.A."/>
            <person name="Kikly K."/>
            <person name="Winkler J.D."/>
            <person name="Sung C.-M."/>
            <person name="Debouck C."/>
            <person name="Richardson S."/>
            <person name="Levy M.A."/>
            <person name="DeWolf W.E. Jr."/>
            <person name="Keller P.M."/>
            <person name="Tomaszek T."/>
            <person name="Head M.S."/>
            <person name="Ryan M.D."/>
            <person name="Haltiwanger R.C."/>
            <person name="Liang P.-H."/>
            <person name="Janson C.A."/>
            <person name="McDevitt P.J."/>
            <person name="Johanson K."/>
            <person name="Concha N.O."/>
            <person name="Chan W."/>
            <person name="Abdel-Meguid S.S."/>
            <person name="Badger A.M."/>
            <person name="Lark M.W."/>
            <person name="Nadeau D.P."/>
            <person name="Suva L.J."/>
            <person name="Gowen M."/>
            <person name="Nuttall M.E."/>
        </authorList>
    </citation>
    <scope>X-RAY CRYSTALLOGRAPHY (2.8 ANGSTROMS)</scope>
    <scope>ACTIVITY REGULATION</scope>
</reference>
<reference evidence="40 41 42" key="37">
    <citation type="journal article" date="2013" name="Proc. Natl. Acad. Sci. U.S.A.">
        <title>Structural snapshots reveal distinct mechanisms of procaspase-3 and -7 activation.</title>
        <authorList>
            <person name="Thomsen N.D."/>
            <person name="Koerber J.T."/>
            <person name="Wells J.A."/>
        </authorList>
    </citation>
    <scope>X-RAY CRYSTALLOGRAPHY (1.80 ANGSTROMS) OF 34-277 IN COMPLEX WITH COVALENT INHIBITORS</scope>
    <scope>MUTAGENESIS OF ASP-9; ASP-28 AND ASP-175</scope>
</reference>
<reference key="38">
    <citation type="journal article" date="2022" name="Mol. Cell">
        <title>Structural insights into caspase ADPR deacylization catalyzed by a bacterial effector and host calmodulin.</title>
        <authorList>
            <person name="Zhang K."/>
            <person name="Peng T."/>
            <person name="Tao X."/>
            <person name="Tian M."/>
            <person name="Li Y."/>
            <person name="Wang Z."/>
            <person name="Ma S."/>
            <person name="Hu S."/>
            <person name="Pan X."/>
            <person name="Xue J."/>
            <person name="Luo J."/>
            <person name="Wu Q."/>
            <person name="Fu Y."/>
            <person name="Li S."/>
        </authorList>
    </citation>
    <scope>STRUCTURE BY ELECTRON MICROSCOPY (3.18 ANGSTROMS) IN COMPLEX WITH C.VIOLACEUM COPC AND CALMODULIN</scope>
    <scope>ADP-RIBOXANATION AT ARG-207 (MICROBIAL INFECTION)</scope>
    <scope>MUTAGENESIS OF ARG-207</scope>
</reference>
<feature type="propeptide" id="PRO_0000004569" evidence="37">
    <location>
        <begin position="1"/>
        <end position="9"/>
    </location>
</feature>
<feature type="propeptide" id="PRO_0000004570" evidence="24 37">
    <location>
        <begin position="10"/>
        <end position="28"/>
    </location>
</feature>
<feature type="chain" id="PRO_0000004571" description="Caspase-3 subunit p17" evidence="37 38 39">
    <location>
        <begin position="29"/>
        <end position="175"/>
    </location>
</feature>
<feature type="chain" id="PRO_0000004572" description="Caspase-3 subunit p12" evidence="37 38 39">
    <location>
        <begin position="176"/>
        <end position="277"/>
    </location>
</feature>
<feature type="active site" evidence="1">
    <location>
        <position position="121"/>
    </location>
</feature>
<feature type="active site" evidence="1">
    <location>
        <position position="163"/>
    </location>
</feature>
<feature type="modified residue" description="N-acetylmethionine" evidence="43 44">
    <location>
        <position position="1"/>
    </location>
</feature>
<feature type="modified residue" description="N6-acetyllysine" evidence="2">
    <location>
        <position position="11"/>
    </location>
</feature>
<feature type="modified residue" description="Phosphoserine" evidence="45">
    <location>
        <position position="26"/>
    </location>
</feature>
<feature type="modified residue" description="S-nitrosocysteine; in inhibited form" evidence="4">
    <location>
        <position position="163"/>
    </location>
</feature>
<feature type="modified residue" description="(Microbial infection) ADP-riboxanated arginine" evidence="18 19 20">
    <location>
        <position position="207"/>
    </location>
</feature>
<feature type="sequence variant" id="VAR_048616" description="In dbSNP:rs35578277.">
    <original>H</original>
    <variation>R</variation>
    <location>
        <position position="22"/>
    </location>
</feature>
<feature type="sequence variant" id="VAR_001401" description="In dbSNP:rs1049210." evidence="7 24 26">
    <original>E</original>
    <variation>D</variation>
    <location>
        <position position="190"/>
    </location>
</feature>
<feature type="mutagenesis site" description="In P3-D3A mutant; abolished cleavage and activation, leading to prevent thiol protease activity; when associated with A-28 and A-175." evidence="14">
    <original>D</original>
    <variation>A</variation>
    <location>
        <position position="9"/>
    </location>
</feature>
<feature type="mutagenesis site" description="In P3-D3A mutant; abolished cleavage and activation, leading to prevent thiol protease activity; when associated with A-9 and A-175." evidence="14">
    <original>D</original>
    <variation>A</variation>
    <location>
        <position position="28"/>
    </location>
</feature>
<feature type="mutagenesis site" description="In P3-D3A mutant; abolished cleavage and activation, leading to prevent thiol protease activity; when associated with A-9 and A-28." evidence="14">
    <original>D</original>
    <variation>A</variation>
    <location>
        <position position="175"/>
    </location>
</feature>
<feature type="mutagenesis site" description="Abolished ADP-riboxanation by C.violaceum CopC." evidence="19 20">
    <original>R</original>
    <variation>A</variation>
    <location>
        <position position="207"/>
    </location>
</feature>
<feature type="sequence conflict" description="In Ref. 3; CAC88866." evidence="36" ref="3">
    <original>ISLDNS</original>
    <variation>MSWDTG</variation>
    <location>
        <begin position="31"/>
        <end position="36"/>
    </location>
</feature>
<feature type="strand" evidence="48">
    <location>
        <begin position="41"/>
        <end position="51"/>
    </location>
</feature>
<feature type="helix" evidence="48">
    <location>
        <begin position="57"/>
        <end position="59"/>
    </location>
</feature>
<feature type="helix" evidence="48">
    <location>
        <begin position="67"/>
        <end position="80"/>
    </location>
</feature>
<feature type="strand" evidence="48">
    <location>
        <begin position="84"/>
        <end position="90"/>
    </location>
</feature>
<feature type="helix" evidence="48">
    <location>
        <begin position="93"/>
        <end position="105"/>
    </location>
</feature>
<feature type="helix" evidence="46">
    <location>
        <begin position="108"/>
        <end position="110"/>
    </location>
</feature>
<feature type="strand" evidence="48">
    <location>
        <begin position="111"/>
        <end position="120"/>
    </location>
</feature>
<feature type="strand" evidence="48">
    <location>
        <begin position="126"/>
        <end position="129"/>
    </location>
</feature>
<feature type="strand" evidence="48">
    <location>
        <begin position="132"/>
        <end position="135"/>
    </location>
</feature>
<feature type="helix" evidence="48">
    <location>
        <begin position="136"/>
        <end position="141"/>
    </location>
</feature>
<feature type="turn" evidence="48">
    <location>
        <begin position="145"/>
        <end position="147"/>
    </location>
</feature>
<feature type="helix" evidence="48">
    <location>
        <begin position="149"/>
        <end position="151"/>
    </location>
</feature>
<feature type="strand" evidence="48">
    <location>
        <begin position="156"/>
        <end position="162"/>
    </location>
</feature>
<feature type="strand" evidence="48">
    <location>
        <begin position="165"/>
        <end position="167"/>
    </location>
</feature>
<feature type="strand" evidence="48">
    <location>
        <begin position="178"/>
        <end position="181"/>
    </location>
</feature>
<feature type="turn" evidence="47">
    <location>
        <begin position="183"/>
        <end position="185"/>
    </location>
</feature>
<feature type="turn" evidence="48">
    <location>
        <begin position="189"/>
        <end position="192"/>
    </location>
</feature>
<feature type="strand" evidence="48">
    <location>
        <begin position="193"/>
        <end position="199"/>
    </location>
</feature>
<feature type="strand" evidence="48">
    <location>
        <begin position="206"/>
        <end position="208"/>
    </location>
</feature>
<feature type="turn" evidence="48">
    <location>
        <begin position="209"/>
        <end position="211"/>
    </location>
</feature>
<feature type="helix" evidence="48">
    <location>
        <begin position="214"/>
        <end position="226"/>
    </location>
</feature>
<feature type="turn" evidence="48">
    <location>
        <begin position="227"/>
        <end position="229"/>
    </location>
</feature>
<feature type="helix" evidence="48">
    <location>
        <begin position="232"/>
        <end position="246"/>
    </location>
</feature>
<feature type="helix" evidence="48">
    <location>
        <begin position="254"/>
        <end position="256"/>
    </location>
</feature>
<feature type="strand" evidence="48">
    <location>
        <begin position="264"/>
        <end position="267"/>
    </location>
</feature>
<feature type="strand" evidence="48">
    <location>
        <begin position="270"/>
        <end position="272"/>
    </location>
</feature>
<sequence>MENTENSVDSKSIKNLEPKIIHGSESMDSGISLDNSYKMDYPEMGLCIIINNKNFHKSTGMTSRSGTDVDAANLRETFRNLKYEVRNKNDLTREEIVELMRDVSKEDHSKRSSFVCVLLSHGEEGIIFGTNGPVDLKKITNFFRGDRCRSLTGKPKLFIIQACRGTELDCGIETDSGVDDDMACHKIPVEADFLYAYSTAPGYYSWRNSKDGSWFIQSLCAMLKQYADKLEFMHILTRVNRKVATEFESFSFDATFHAKKQIPCIVSMLTKELYFYH</sequence>
<evidence type="ECO:0000250" key="1">
    <source>
        <dbReference type="UniProtKB" id="P29466"/>
    </source>
</evidence>
<evidence type="ECO:0000250" key="2">
    <source>
        <dbReference type="UniProtKB" id="P70677"/>
    </source>
</evidence>
<evidence type="ECO:0000250" key="3">
    <source>
        <dbReference type="UniProtKB" id="Q60431"/>
    </source>
</evidence>
<evidence type="ECO:0000269" key="4">
    <source>
    </source>
</evidence>
<evidence type="ECO:0000269" key="5">
    <source>
    </source>
</evidence>
<evidence type="ECO:0000269" key="6">
    <source>
    </source>
</evidence>
<evidence type="ECO:0000269" key="7">
    <source>
    </source>
</evidence>
<evidence type="ECO:0000269" key="8">
    <source>
    </source>
</evidence>
<evidence type="ECO:0000269" key="9">
    <source>
    </source>
</evidence>
<evidence type="ECO:0000269" key="10">
    <source>
    </source>
</evidence>
<evidence type="ECO:0000269" key="11">
    <source>
    </source>
</evidence>
<evidence type="ECO:0000269" key="12">
    <source>
    </source>
</evidence>
<evidence type="ECO:0000269" key="13">
    <source>
    </source>
</evidence>
<evidence type="ECO:0000269" key="14">
    <source>
    </source>
</evidence>
<evidence type="ECO:0000269" key="15">
    <source>
    </source>
</evidence>
<evidence type="ECO:0000269" key="16">
    <source>
    </source>
</evidence>
<evidence type="ECO:0000269" key="17">
    <source>
    </source>
</evidence>
<evidence type="ECO:0000269" key="18">
    <source>
    </source>
</evidence>
<evidence type="ECO:0000269" key="19">
    <source>
    </source>
</evidence>
<evidence type="ECO:0000269" key="20">
    <source>
    </source>
</evidence>
<evidence type="ECO:0000269" key="21">
    <source>
    </source>
</evidence>
<evidence type="ECO:0000269" key="22">
    <source>
    </source>
</evidence>
<evidence type="ECO:0000269" key="23">
    <source>
    </source>
</evidence>
<evidence type="ECO:0000269" key="24">
    <source>
    </source>
</evidence>
<evidence type="ECO:0000269" key="25">
    <source>
    </source>
</evidence>
<evidence type="ECO:0000269" key="26">
    <source>
    </source>
</evidence>
<evidence type="ECO:0000269" key="27">
    <source>
    </source>
</evidence>
<evidence type="ECO:0000269" key="28">
    <source>
    </source>
</evidence>
<evidence type="ECO:0000269" key="29">
    <source>
    </source>
</evidence>
<evidence type="ECO:0000303" key="30">
    <source>
    </source>
</evidence>
<evidence type="ECO:0000303" key="31">
    <source>
    </source>
</evidence>
<evidence type="ECO:0000303" key="32">
    <source>
    </source>
</evidence>
<evidence type="ECO:0000303" key="33">
    <source>
    </source>
</evidence>
<evidence type="ECO:0000303" key="34">
    <source>
    </source>
</evidence>
<evidence type="ECO:0000303" key="35">
    <source>
    </source>
</evidence>
<evidence type="ECO:0000305" key="36"/>
<evidence type="ECO:0000305" key="37">
    <source>
    </source>
</evidence>
<evidence type="ECO:0000305" key="38">
    <source>
    </source>
</evidence>
<evidence type="ECO:0000305" key="39">
    <source>
    </source>
</evidence>
<evidence type="ECO:0007744" key="40">
    <source>
        <dbReference type="PDB" id="4JQY"/>
    </source>
</evidence>
<evidence type="ECO:0007744" key="41">
    <source>
        <dbReference type="PDB" id="4JQZ"/>
    </source>
</evidence>
<evidence type="ECO:0007744" key="42">
    <source>
        <dbReference type="PDB" id="4JR0"/>
    </source>
</evidence>
<evidence type="ECO:0007744" key="43">
    <source>
    </source>
</evidence>
<evidence type="ECO:0007744" key="44">
    <source>
    </source>
</evidence>
<evidence type="ECO:0007744" key="45">
    <source>
    </source>
</evidence>
<evidence type="ECO:0007829" key="46">
    <source>
        <dbReference type="PDB" id="1I3O"/>
    </source>
</evidence>
<evidence type="ECO:0007829" key="47">
    <source>
        <dbReference type="PDB" id="1NMS"/>
    </source>
</evidence>
<evidence type="ECO:0007829" key="48">
    <source>
        <dbReference type="PDB" id="2DKO"/>
    </source>
</evidence>
<protein>
    <recommendedName>
        <fullName evidence="30 31">Caspase-3</fullName>
        <shortName>CASP-3</shortName>
        <ecNumber evidence="13 15 16 17 24">3.4.22.56</ecNumber>
    </recommendedName>
    <alternativeName>
        <fullName evidence="34">Apopain</fullName>
    </alternativeName>
    <alternativeName>
        <fullName evidence="32">Cysteine protease CPP32</fullName>
        <shortName evidence="32 35">CPP-32</shortName>
    </alternativeName>
    <alternativeName>
        <fullName evidence="32">Protein Yama</fullName>
    </alternativeName>
    <alternativeName>
        <fullName>SREBP cleavage activity 1</fullName>
        <shortName>SCA-1</shortName>
    </alternativeName>
    <component>
        <recommendedName>
            <fullName>Caspase-3 subunit p17</fullName>
        </recommendedName>
    </component>
    <component>
        <recommendedName>
            <fullName>Caspase-3 subunit p12</fullName>
        </recommendedName>
    </component>
</protein>
<keyword id="KW-0002">3D-structure</keyword>
<keyword id="KW-0007">Acetylation</keyword>
<keyword id="KW-0053">Apoptosis</keyword>
<keyword id="KW-0963">Cytoplasm</keyword>
<keyword id="KW-0903">Direct protein sequencing</keyword>
<keyword id="KW-0378">Hydrolase</keyword>
<keyword id="KW-0597">Phosphoprotein</keyword>
<keyword id="KW-0645">Protease</keyword>
<keyword id="KW-1267">Proteomics identification</keyword>
<keyword id="KW-1185">Reference proteome</keyword>
<keyword id="KW-0702">S-nitrosylation</keyword>
<keyword id="KW-0788">Thiol protease</keyword>
<keyword id="KW-0832">Ubl conjugation</keyword>
<keyword id="KW-0865">Zymogen</keyword>
<dbReference type="EC" id="3.4.22.56" evidence="13 15 16 17 24"/>
<dbReference type="EMBL" id="U13737">
    <property type="protein sequence ID" value="AAA65015.1"/>
    <property type="molecule type" value="mRNA"/>
</dbReference>
<dbReference type="EMBL" id="U13738">
    <property type="protein sequence ID" value="AAB60355.1"/>
    <property type="molecule type" value="mRNA"/>
</dbReference>
<dbReference type="EMBL" id="U26943">
    <property type="protein sequence ID" value="AAA74929.1"/>
    <property type="molecule type" value="mRNA"/>
</dbReference>
<dbReference type="EMBL" id="AJ413269">
    <property type="protein sequence ID" value="CAC88866.1"/>
    <property type="molecule type" value="mRNA"/>
</dbReference>
<dbReference type="EMBL" id="AK291337">
    <property type="protein sequence ID" value="BAF84026.1"/>
    <property type="molecule type" value="mRNA"/>
</dbReference>
<dbReference type="EMBL" id="AY219866">
    <property type="protein sequence ID" value="AAO25654.1"/>
    <property type="molecule type" value="Genomic_DNA"/>
</dbReference>
<dbReference type="EMBL" id="CH471056">
    <property type="protein sequence ID" value="EAX04673.1"/>
    <property type="molecule type" value="Genomic_DNA"/>
</dbReference>
<dbReference type="EMBL" id="CH471056">
    <property type="protein sequence ID" value="EAX04674.1"/>
    <property type="molecule type" value="Genomic_DNA"/>
</dbReference>
<dbReference type="EMBL" id="CH471056">
    <property type="protein sequence ID" value="EAX04675.1"/>
    <property type="molecule type" value="Genomic_DNA"/>
</dbReference>
<dbReference type="EMBL" id="BC016926">
    <property type="protein sequence ID" value="AAH16926.1"/>
    <property type="molecule type" value="mRNA"/>
</dbReference>
<dbReference type="CCDS" id="CCDS3836.1"/>
<dbReference type="PIR" id="A55315">
    <property type="entry name" value="A55315"/>
</dbReference>
<dbReference type="RefSeq" id="NP_001341706.1">
    <property type="nucleotide sequence ID" value="NM_001354777.2"/>
</dbReference>
<dbReference type="RefSeq" id="NP_004337.2">
    <property type="nucleotide sequence ID" value="NM_004346.3"/>
</dbReference>
<dbReference type="RefSeq" id="NP_116786.1">
    <property type="nucleotide sequence ID" value="NM_032991.3"/>
</dbReference>
<dbReference type="RefSeq" id="XP_011530603.1">
    <property type="nucleotide sequence ID" value="XM_011532301.1"/>
</dbReference>
<dbReference type="RefSeq" id="XP_047272192.1">
    <property type="nucleotide sequence ID" value="XM_047416236.1"/>
</dbReference>
<dbReference type="RefSeq" id="XP_047272193.1">
    <property type="nucleotide sequence ID" value="XM_047416237.1"/>
</dbReference>
<dbReference type="RefSeq" id="XP_047272194.1">
    <property type="nucleotide sequence ID" value="XM_047416238.1"/>
</dbReference>
<dbReference type="RefSeq" id="XP_047272195.1">
    <property type="nucleotide sequence ID" value="XM_047416239.1"/>
</dbReference>
<dbReference type="RefSeq" id="XP_054206930.1">
    <property type="nucleotide sequence ID" value="XM_054350955.1"/>
</dbReference>
<dbReference type="RefSeq" id="XP_054206931.1">
    <property type="nucleotide sequence ID" value="XM_054350956.1"/>
</dbReference>
<dbReference type="RefSeq" id="XP_054206932.1">
    <property type="nucleotide sequence ID" value="XM_054350957.1"/>
</dbReference>
<dbReference type="RefSeq" id="XP_054206933.1">
    <property type="nucleotide sequence ID" value="XM_054350958.1"/>
</dbReference>
<dbReference type="PDB" id="1CP3">
    <property type="method" value="X-ray"/>
    <property type="resolution" value="2.30 A"/>
    <property type="chains" value="A/B=1-277"/>
</dbReference>
<dbReference type="PDB" id="1GFW">
    <property type="method" value="X-ray"/>
    <property type="resolution" value="2.80 A"/>
    <property type="chains" value="A=29-175, B=181-277"/>
</dbReference>
<dbReference type="PDB" id="1I3O">
    <property type="method" value="X-ray"/>
    <property type="resolution" value="2.70 A"/>
    <property type="chains" value="A/C=1-175, B/D=176-277"/>
</dbReference>
<dbReference type="PDB" id="1NME">
    <property type="method" value="X-ray"/>
    <property type="resolution" value="1.60 A"/>
    <property type="chains" value="A=29-174, B=186-277"/>
</dbReference>
<dbReference type="PDB" id="1NMQ">
    <property type="method" value="X-ray"/>
    <property type="resolution" value="2.40 A"/>
    <property type="chains" value="A/B=29-277"/>
</dbReference>
<dbReference type="PDB" id="1NMS">
    <property type="method" value="X-ray"/>
    <property type="resolution" value="1.70 A"/>
    <property type="chains" value="A/B=29-277"/>
</dbReference>
<dbReference type="PDB" id="1PAU">
    <property type="method" value="X-ray"/>
    <property type="resolution" value="2.50 A"/>
    <property type="chains" value="A=29-175, B=176-277"/>
</dbReference>
<dbReference type="PDB" id="1QX3">
    <property type="method" value="X-ray"/>
    <property type="resolution" value="1.90 A"/>
    <property type="chains" value="A=29-277"/>
</dbReference>
<dbReference type="PDB" id="1RE1">
    <property type="method" value="X-ray"/>
    <property type="resolution" value="2.50 A"/>
    <property type="chains" value="A=29-175, B=176-277"/>
</dbReference>
<dbReference type="PDB" id="1RHJ">
    <property type="method" value="X-ray"/>
    <property type="resolution" value="2.20 A"/>
    <property type="chains" value="A/C=29-175, B/D=176-277"/>
</dbReference>
<dbReference type="PDB" id="1RHK">
    <property type="method" value="X-ray"/>
    <property type="resolution" value="2.50 A"/>
    <property type="chains" value="A=29-175, B=176-277"/>
</dbReference>
<dbReference type="PDB" id="1RHM">
    <property type="method" value="X-ray"/>
    <property type="resolution" value="2.50 A"/>
    <property type="chains" value="A/C=29-175, B/D=176-277"/>
</dbReference>
<dbReference type="PDB" id="1RHQ">
    <property type="method" value="X-ray"/>
    <property type="resolution" value="3.00 A"/>
    <property type="chains" value="A/D=29-175, B/E=176-277"/>
</dbReference>
<dbReference type="PDB" id="1RHR">
    <property type="method" value="X-ray"/>
    <property type="resolution" value="3.00 A"/>
    <property type="chains" value="A=29-175, B=176-277"/>
</dbReference>
<dbReference type="PDB" id="1RHU">
    <property type="method" value="X-ray"/>
    <property type="resolution" value="2.51 A"/>
    <property type="chains" value="A=29-175, B=176-277"/>
</dbReference>
<dbReference type="PDB" id="2C1E">
    <property type="method" value="X-ray"/>
    <property type="resolution" value="1.77 A"/>
    <property type="chains" value="A=29-175, B=176-277"/>
</dbReference>
<dbReference type="PDB" id="2C2K">
    <property type="method" value="X-ray"/>
    <property type="resolution" value="1.87 A"/>
    <property type="chains" value="A=29-175, B=176-277"/>
</dbReference>
<dbReference type="PDB" id="2C2M">
    <property type="method" value="X-ray"/>
    <property type="resolution" value="1.94 A"/>
    <property type="chains" value="A=29-175, B=176-277"/>
</dbReference>
<dbReference type="PDB" id="2C2O">
    <property type="method" value="X-ray"/>
    <property type="resolution" value="2.45 A"/>
    <property type="chains" value="A=29-175, B=176-277"/>
</dbReference>
<dbReference type="PDB" id="2CDR">
    <property type="method" value="X-ray"/>
    <property type="resolution" value="1.70 A"/>
    <property type="chains" value="A=29-175, B=176-277"/>
</dbReference>
<dbReference type="PDB" id="2CJX">
    <property type="method" value="X-ray"/>
    <property type="resolution" value="1.70 A"/>
    <property type="chains" value="A=29-175, B=176-277"/>
</dbReference>
<dbReference type="PDB" id="2CJY">
    <property type="method" value="X-ray"/>
    <property type="resolution" value="1.67 A"/>
    <property type="chains" value="A=29-175, B=176-277"/>
</dbReference>
<dbReference type="PDB" id="2CNK">
    <property type="method" value="X-ray"/>
    <property type="resolution" value="1.75 A"/>
    <property type="chains" value="A=29-175, B=176-277"/>
</dbReference>
<dbReference type="PDB" id="2CNL">
    <property type="method" value="X-ray"/>
    <property type="resolution" value="1.67 A"/>
    <property type="chains" value="A=29-175, B=176-277"/>
</dbReference>
<dbReference type="PDB" id="2CNN">
    <property type="method" value="X-ray"/>
    <property type="resolution" value="1.70 A"/>
    <property type="chains" value="A=29-175, B=176-277"/>
</dbReference>
<dbReference type="PDB" id="2CNO">
    <property type="method" value="X-ray"/>
    <property type="resolution" value="1.95 A"/>
    <property type="chains" value="A=29-175, B=176-277"/>
</dbReference>
<dbReference type="PDB" id="2DKO">
    <property type="method" value="X-ray"/>
    <property type="resolution" value="1.06 A"/>
    <property type="chains" value="A=29-174, B=175-277"/>
</dbReference>
<dbReference type="PDB" id="2H5I">
    <property type="method" value="X-ray"/>
    <property type="resolution" value="1.69 A"/>
    <property type="chains" value="A=29-174, B=184-277"/>
</dbReference>
<dbReference type="PDB" id="2H5J">
    <property type="method" value="X-ray"/>
    <property type="resolution" value="2.00 A"/>
    <property type="chains" value="A/C=29-174, B/D=184-277"/>
</dbReference>
<dbReference type="PDB" id="2H65">
    <property type="method" value="X-ray"/>
    <property type="resolution" value="2.30 A"/>
    <property type="chains" value="A/C=29-174, B/D=184-277"/>
</dbReference>
<dbReference type="PDB" id="2J30">
    <property type="method" value="X-ray"/>
    <property type="resolution" value="1.40 A"/>
    <property type="chains" value="A=29-277"/>
</dbReference>
<dbReference type="PDB" id="2J31">
    <property type="method" value="X-ray"/>
    <property type="resolution" value="1.50 A"/>
    <property type="chains" value="A=29-277"/>
</dbReference>
<dbReference type="PDB" id="2J32">
    <property type="method" value="X-ray"/>
    <property type="resolution" value="1.30 A"/>
    <property type="chains" value="A=29-277"/>
</dbReference>
<dbReference type="PDB" id="2J33">
    <property type="method" value="X-ray"/>
    <property type="resolution" value="2.00 A"/>
    <property type="chains" value="A=29-277"/>
</dbReference>
<dbReference type="PDB" id="2XYG">
    <property type="method" value="X-ray"/>
    <property type="resolution" value="1.54 A"/>
    <property type="chains" value="A=29-174, B=185-277"/>
</dbReference>
<dbReference type="PDB" id="2XYH">
    <property type="method" value="X-ray"/>
    <property type="resolution" value="1.89 A"/>
    <property type="chains" value="A=29-174, B=185-277"/>
</dbReference>
<dbReference type="PDB" id="2XYP">
    <property type="method" value="X-ray"/>
    <property type="resolution" value="1.86 A"/>
    <property type="chains" value="A=29-174, B=185-277"/>
</dbReference>
<dbReference type="PDB" id="2XZD">
    <property type="method" value="X-ray"/>
    <property type="resolution" value="2.10 A"/>
    <property type="chains" value="A/C=27-175, B/D=176-277"/>
</dbReference>
<dbReference type="PDB" id="2XZT">
    <property type="method" value="X-ray"/>
    <property type="resolution" value="2.70 A"/>
    <property type="chains" value="A/C=29-175, B/D=176-277"/>
</dbReference>
<dbReference type="PDB" id="2Y0B">
    <property type="method" value="X-ray"/>
    <property type="resolution" value="2.10 A"/>
    <property type="chains" value="A/C=29-175, B/D=176-277"/>
</dbReference>
<dbReference type="PDB" id="3DEH">
    <property type="method" value="X-ray"/>
    <property type="resolution" value="2.50 A"/>
    <property type="chains" value="A/B/C/D=29-277"/>
</dbReference>
<dbReference type="PDB" id="3DEI">
    <property type="method" value="X-ray"/>
    <property type="resolution" value="2.80 A"/>
    <property type="chains" value="A/B/C/D=29-277"/>
</dbReference>
<dbReference type="PDB" id="3DEJ">
    <property type="method" value="X-ray"/>
    <property type="resolution" value="2.60 A"/>
    <property type="chains" value="A/B/C/D=29-277"/>
</dbReference>
<dbReference type="PDB" id="3DEK">
    <property type="method" value="X-ray"/>
    <property type="resolution" value="2.40 A"/>
    <property type="chains" value="A/B/C/D=29-277"/>
</dbReference>
<dbReference type="PDB" id="3EDQ">
    <property type="method" value="X-ray"/>
    <property type="resolution" value="1.61 A"/>
    <property type="chains" value="A/C=29-175, B/D=176-277"/>
</dbReference>
<dbReference type="PDB" id="3GJQ">
    <property type="method" value="X-ray"/>
    <property type="resolution" value="2.60 A"/>
    <property type="chains" value="A/C=29-175, B/D=176-277"/>
</dbReference>
<dbReference type="PDB" id="3GJR">
    <property type="method" value="X-ray"/>
    <property type="resolution" value="2.20 A"/>
    <property type="chains" value="A/C=29-175, B/D=176-277"/>
</dbReference>
<dbReference type="PDB" id="3GJS">
    <property type="method" value="X-ray"/>
    <property type="resolution" value="1.90 A"/>
    <property type="chains" value="A/C=29-175, B/D=176-277"/>
</dbReference>
<dbReference type="PDB" id="3GJT">
    <property type="method" value="X-ray"/>
    <property type="resolution" value="2.20 A"/>
    <property type="chains" value="A/C=29-175, B/D=176-277"/>
</dbReference>
<dbReference type="PDB" id="3H0E">
    <property type="method" value="X-ray"/>
    <property type="resolution" value="2.00 A"/>
    <property type="chains" value="A/B=29-277"/>
</dbReference>
<dbReference type="PDB" id="3ITN">
    <property type="method" value="X-ray"/>
    <property type="resolution" value="1.63 A"/>
    <property type="chains" value="A=29-277"/>
</dbReference>
<dbReference type="PDB" id="3KJF">
    <property type="method" value="X-ray"/>
    <property type="resolution" value="2.00 A"/>
    <property type="chains" value="A=29-175, B=176-277"/>
</dbReference>
<dbReference type="PDB" id="3PCX">
    <property type="method" value="X-ray"/>
    <property type="resolution" value="1.50 A"/>
    <property type="chains" value="A=29-277"/>
</dbReference>
<dbReference type="PDB" id="3PD0">
    <property type="method" value="X-ray"/>
    <property type="resolution" value="2.00 A"/>
    <property type="chains" value="A=29-277"/>
</dbReference>
<dbReference type="PDB" id="3PD1">
    <property type="method" value="X-ray"/>
    <property type="resolution" value="1.62 A"/>
    <property type="chains" value="A=29-277"/>
</dbReference>
<dbReference type="PDB" id="4DCJ">
    <property type="method" value="X-ray"/>
    <property type="resolution" value="1.70 A"/>
    <property type="chains" value="A/D=29-175, B/E=176-277"/>
</dbReference>
<dbReference type="PDB" id="4DCO">
    <property type="method" value="X-ray"/>
    <property type="resolution" value="1.70 A"/>
    <property type="chains" value="A/D=29-175, B/E=176-277"/>
</dbReference>
<dbReference type="PDB" id="4DCP">
    <property type="method" value="X-ray"/>
    <property type="resolution" value="1.70 A"/>
    <property type="chains" value="A/D=29-175, B/E=176-277"/>
</dbReference>
<dbReference type="PDB" id="4EHA">
    <property type="method" value="X-ray"/>
    <property type="resolution" value="1.70 A"/>
    <property type="chains" value="A/C=1-277"/>
</dbReference>
<dbReference type="PDB" id="4EHD">
    <property type="method" value="X-ray"/>
    <property type="resolution" value="1.58 A"/>
    <property type="chains" value="A=1-277"/>
</dbReference>
<dbReference type="PDB" id="4EHF">
    <property type="method" value="X-ray"/>
    <property type="resolution" value="1.66 A"/>
    <property type="chains" value="A=1-277"/>
</dbReference>
<dbReference type="PDB" id="4EHH">
    <property type="method" value="X-ray"/>
    <property type="resolution" value="1.78 A"/>
    <property type="chains" value="A=1-277"/>
</dbReference>
<dbReference type="PDB" id="4EHK">
    <property type="method" value="X-ray"/>
    <property type="resolution" value="1.67 A"/>
    <property type="chains" value="A/C=1-277"/>
</dbReference>
<dbReference type="PDB" id="4EHL">
    <property type="method" value="X-ray"/>
    <property type="resolution" value="1.80 A"/>
    <property type="chains" value="A/C=1-277"/>
</dbReference>
<dbReference type="PDB" id="4EHN">
    <property type="method" value="X-ray"/>
    <property type="resolution" value="1.69 A"/>
    <property type="chains" value="A=1-277"/>
</dbReference>
<dbReference type="PDB" id="4JJE">
    <property type="method" value="X-ray"/>
    <property type="resolution" value="1.48 A"/>
    <property type="chains" value="A=29-277"/>
</dbReference>
<dbReference type="PDB" id="4JQY">
    <property type="method" value="X-ray"/>
    <property type="resolution" value="2.50 A"/>
    <property type="chains" value="A/B=34-277"/>
</dbReference>
<dbReference type="PDB" id="4JQZ">
    <property type="method" value="X-ray"/>
    <property type="resolution" value="2.89 A"/>
    <property type="chains" value="A/B=34-277"/>
</dbReference>
<dbReference type="PDB" id="4JR0">
    <property type="method" value="X-ray"/>
    <property type="resolution" value="1.80 A"/>
    <property type="chains" value="A/B=34-277"/>
</dbReference>
<dbReference type="PDB" id="4PRY">
    <property type="method" value="X-ray"/>
    <property type="resolution" value="1.70 A"/>
    <property type="chains" value="A=1-277"/>
</dbReference>
<dbReference type="PDB" id="4PS0">
    <property type="method" value="X-ray"/>
    <property type="resolution" value="1.63 A"/>
    <property type="chains" value="A/B=1-277"/>
</dbReference>
<dbReference type="PDB" id="4QTX">
    <property type="method" value="X-ray"/>
    <property type="resolution" value="1.97 A"/>
    <property type="chains" value="A=1-277"/>
</dbReference>
<dbReference type="PDB" id="4QTY">
    <property type="method" value="X-ray"/>
    <property type="resolution" value="1.60 A"/>
    <property type="chains" value="A=29-277"/>
</dbReference>
<dbReference type="PDB" id="4QU0">
    <property type="method" value="X-ray"/>
    <property type="resolution" value="1.95 A"/>
    <property type="chains" value="A=1-277"/>
</dbReference>
<dbReference type="PDB" id="4QU5">
    <property type="method" value="X-ray"/>
    <property type="resolution" value="1.91 A"/>
    <property type="chains" value="A=1-277"/>
</dbReference>
<dbReference type="PDB" id="4QU8">
    <property type="method" value="X-ray"/>
    <property type="resolution" value="1.72 A"/>
    <property type="chains" value="A=1-277"/>
</dbReference>
<dbReference type="PDB" id="4QU9">
    <property type="method" value="X-ray"/>
    <property type="resolution" value="1.56 A"/>
    <property type="chains" value="A=1-277"/>
</dbReference>
<dbReference type="PDB" id="4QUA">
    <property type="method" value="X-ray"/>
    <property type="resolution" value="1.89 A"/>
    <property type="chains" value="A=1-277"/>
</dbReference>
<dbReference type="PDB" id="4QUB">
    <property type="method" value="X-ray"/>
    <property type="resolution" value="1.69 A"/>
    <property type="chains" value="A=1-277"/>
</dbReference>
<dbReference type="PDB" id="4QUD">
    <property type="method" value="X-ray"/>
    <property type="resolution" value="2.00 A"/>
    <property type="chains" value="A/B=1-277"/>
</dbReference>
<dbReference type="PDB" id="4QUE">
    <property type="method" value="X-ray"/>
    <property type="resolution" value="1.84 A"/>
    <property type="chains" value="A/C=1-277"/>
</dbReference>
<dbReference type="PDB" id="4QUG">
    <property type="method" value="X-ray"/>
    <property type="resolution" value="1.92 A"/>
    <property type="chains" value="A/C=1-277"/>
</dbReference>
<dbReference type="PDB" id="4QUH">
    <property type="method" value="X-ray"/>
    <property type="resolution" value="1.76 A"/>
    <property type="chains" value="A/C=1-277"/>
</dbReference>
<dbReference type="PDB" id="4QUI">
    <property type="method" value="X-ray"/>
    <property type="resolution" value="1.76 A"/>
    <property type="chains" value="A/B=1-277"/>
</dbReference>
<dbReference type="PDB" id="4QUJ">
    <property type="method" value="X-ray"/>
    <property type="resolution" value="1.50 A"/>
    <property type="chains" value="A=1-277"/>
</dbReference>
<dbReference type="PDB" id="4QUL">
    <property type="method" value="X-ray"/>
    <property type="resolution" value="1.90 A"/>
    <property type="chains" value="A/C=1-277"/>
</dbReference>
<dbReference type="PDB" id="5I9B">
    <property type="method" value="X-ray"/>
    <property type="resolution" value="1.80 A"/>
    <property type="chains" value="A=1-277"/>
</dbReference>
<dbReference type="PDB" id="5I9T">
    <property type="method" value="X-ray"/>
    <property type="resolution" value="1.95 A"/>
    <property type="chains" value="A/C=1-277"/>
</dbReference>
<dbReference type="PDB" id="5IAB">
    <property type="method" value="X-ray"/>
    <property type="resolution" value="1.79 A"/>
    <property type="chains" value="A/C=1-277"/>
</dbReference>
<dbReference type="PDB" id="5IAE">
    <property type="method" value="X-ray"/>
    <property type="resolution" value="1.55 A"/>
    <property type="chains" value="A/C=1-277"/>
</dbReference>
<dbReference type="PDB" id="5IAG">
    <property type="method" value="X-ray"/>
    <property type="resolution" value="1.98 A"/>
    <property type="chains" value="A=1-277"/>
</dbReference>
<dbReference type="PDB" id="5IAJ">
    <property type="method" value="X-ray"/>
    <property type="resolution" value="1.58 A"/>
    <property type="chains" value="A=1-277"/>
</dbReference>
<dbReference type="PDB" id="5IAK">
    <property type="method" value="X-ray"/>
    <property type="resolution" value="1.82 A"/>
    <property type="chains" value="A=1-277"/>
</dbReference>
<dbReference type="PDB" id="5IAN">
    <property type="method" value="X-ray"/>
    <property type="resolution" value="2.70 A"/>
    <property type="chains" value="A=1-277"/>
</dbReference>
<dbReference type="PDB" id="5IAR">
    <property type="method" value="X-ray"/>
    <property type="resolution" value="1.76 A"/>
    <property type="chains" value="A=1-277"/>
</dbReference>
<dbReference type="PDB" id="5IAS">
    <property type="method" value="X-ray"/>
    <property type="resolution" value="1.54 A"/>
    <property type="chains" value="A=1-277"/>
</dbReference>
<dbReference type="PDB" id="5IBC">
    <property type="method" value="X-ray"/>
    <property type="resolution" value="1.66 A"/>
    <property type="chains" value="A=1-277"/>
</dbReference>
<dbReference type="PDB" id="5IBP">
    <property type="method" value="X-ray"/>
    <property type="resolution" value="1.38 A"/>
    <property type="chains" value="A=1-277"/>
</dbReference>
<dbReference type="PDB" id="5IBR">
    <property type="method" value="X-ray"/>
    <property type="resolution" value="1.74 A"/>
    <property type="chains" value="A/C=1-277"/>
</dbReference>
<dbReference type="PDB" id="5IC4">
    <property type="method" value="X-ray"/>
    <property type="resolution" value="2.65 A"/>
    <property type="chains" value="A/C/E/G=1-175, B/D/F/H=176-276"/>
</dbReference>
<dbReference type="PDB" id="7XN4">
    <property type="method" value="EM"/>
    <property type="resolution" value="3.35 A"/>
    <property type="chains" value="A/C=1-277"/>
</dbReference>
<dbReference type="PDB" id="7XN5">
    <property type="method" value="EM"/>
    <property type="resolution" value="3.18 A"/>
    <property type="chains" value="A/C=1-277"/>
</dbReference>
<dbReference type="PDB" id="7XN6">
    <property type="method" value="EM"/>
    <property type="resolution" value="3.45 A"/>
    <property type="chains" value="A/C=1-277"/>
</dbReference>
<dbReference type="PDBsum" id="1CP3"/>
<dbReference type="PDBsum" id="1GFW"/>
<dbReference type="PDBsum" id="1I3O"/>
<dbReference type="PDBsum" id="1NME"/>
<dbReference type="PDBsum" id="1NMQ"/>
<dbReference type="PDBsum" id="1NMS"/>
<dbReference type="PDBsum" id="1PAU"/>
<dbReference type="PDBsum" id="1QX3"/>
<dbReference type="PDBsum" id="1RE1"/>
<dbReference type="PDBsum" id="1RHJ"/>
<dbReference type="PDBsum" id="1RHK"/>
<dbReference type="PDBsum" id="1RHM"/>
<dbReference type="PDBsum" id="1RHQ"/>
<dbReference type="PDBsum" id="1RHR"/>
<dbReference type="PDBsum" id="1RHU"/>
<dbReference type="PDBsum" id="2C1E"/>
<dbReference type="PDBsum" id="2C2K"/>
<dbReference type="PDBsum" id="2C2M"/>
<dbReference type="PDBsum" id="2C2O"/>
<dbReference type="PDBsum" id="2CDR"/>
<dbReference type="PDBsum" id="2CJX"/>
<dbReference type="PDBsum" id="2CJY"/>
<dbReference type="PDBsum" id="2CNK"/>
<dbReference type="PDBsum" id="2CNL"/>
<dbReference type="PDBsum" id="2CNN"/>
<dbReference type="PDBsum" id="2CNO"/>
<dbReference type="PDBsum" id="2DKO"/>
<dbReference type="PDBsum" id="2H5I"/>
<dbReference type="PDBsum" id="2H5J"/>
<dbReference type="PDBsum" id="2H65"/>
<dbReference type="PDBsum" id="2J30"/>
<dbReference type="PDBsum" id="2J31"/>
<dbReference type="PDBsum" id="2J32"/>
<dbReference type="PDBsum" id="2J33"/>
<dbReference type="PDBsum" id="2XYG"/>
<dbReference type="PDBsum" id="2XYH"/>
<dbReference type="PDBsum" id="2XYP"/>
<dbReference type="PDBsum" id="2XZD"/>
<dbReference type="PDBsum" id="2XZT"/>
<dbReference type="PDBsum" id="2Y0B"/>
<dbReference type="PDBsum" id="3DEH"/>
<dbReference type="PDBsum" id="3DEI"/>
<dbReference type="PDBsum" id="3DEJ"/>
<dbReference type="PDBsum" id="3DEK"/>
<dbReference type="PDBsum" id="3EDQ"/>
<dbReference type="PDBsum" id="3GJQ"/>
<dbReference type="PDBsum" id="3GJR"/>
<dbReference type="PDBsum" id="3GJS"/>
<dbReference type="PDBsum" id="3GJT"/>
<dbReference type="PDBsum" id="3H0E"/>
<dbReference type="PDBsum" id="3ITN"/>
<dbReference type="PDBsum" id="3KJF"/>
<dbReference type="PDBsum" id="3PCX"/>
<dbReference type="PDBsum" id="3PD0"/>
<dbReference type="PDBsum" id="3PD1"/>
<dbReference type="PDBsum" id="4DCJ"/>
<dbReference type="PDBsum" id="4DCO"/>
<dbReference type="PDBsum" id="4DCP"/>
<dbReference type="PDBsum" id="4EHA"/>
<dbReference type="PDBsum" id="4EHD"/>
<dbReference type="PDBsum" id="4EHF"/>
<dbReference type="PDBsum" id="4EHH"/>
<dbReference type="PDBsum" id="4EHK"/>
<dbReference type="PDBsum" id="4EHL"/>
<dbReference type="PDBsum" id="4EHN"/>
<dbReference type="PDBsum" id="4JJE"/>
<dbReference type="PDBsum" id="4JQY"/>
<dbReference type="PDBsum" id="4JQZ"/>
<dbReference type="PDBsum" id="4JR0"/>
<dbReference type="PDBsum" id="4PRY"/>
<dbReference type="PDBsum" id="4PS0"/>
<dbReference type="PDBsum" id="4QTX"/>
<dbReference type="PDBsum" id="4QTY"/>
<dbReference type="PDBsum" id="4QU0"/>
<dbReference type="PDBsum" id="4QU5"/>
<dbReference type="PDBsum" id="4QU8"/>
<dbReference type="PDBsum" id="4QU9"/>
<dbReference type="PDBsum" id="4QUA"/>
<dbReference type="PDBsum" id="4QUB"/>
<dbReference type="PDBsum" id="4QUD"/>
<dbReference type="PDBsum" id="4QUE"/>
<dbReference type="PDBsum" id="4QUG"/>
<dbReference type="PDBsum" id="4QUH"/>
<dbReference type="PDBsum" id="4QUI"/>
<dbReference type="PDBsum" id="4QUJ"/>
<dbReference type="PDBsum" id="4QUL"/>
<dbReference type="PDBsum" id="5I9B"/>
<dbReference type="PDBsum" id="5I9T"/>
<dbReference type="PDBsum" id="5IAB"/>
<dbReference type="PDBsum" id="5IAE"/>
<dbReference type="PDBsum" id="5IAG"/>
<dbReference type="PDBsum" id="5IAJ"/>
<dbReference type="PDBsum" id="5IAK"/>
<dbReference type="PDBsum" id="5IAN"/>
<dbReference type="PDBsum" id="5IAR"/>
<dbReference type="PDBsum" id="5IAS"/>
<dbReference type="PDBsum" id="5IBC"/>
<dbReference type="PDBsum" id="5IBP"/>
<dbReference type="PDBsum" id="5IBR"/>
<dbReference type="PDBsum" id="5IC4"/>
<dbReference type="PDBsum" id="7XN4"/>
<dbReference type="PDBsum" id="7XN5"/>
<dbReference type="PDBsum" id="7XN6"/>
<dbReference type="EMDB" id="EMD-27839"/>
<dbReference type="EMDB" id="EMD-33310"/>
<dbReference type="EMDB" id="EMD-33311"/>
<dbReference type="EMDB" id="EMD-33312"/>
<dbReference type="SMR" id="P42574"/>
<dbReference type="BioGRID" id="107286">
    <property type="interactions" value="135"/>
</dbReference>
<dbReference type="ComplexPortal" id="CPX-970">
    <property type="entry name" value="Caspase-3 complex"/>
</dbReference>
<dbReference type="CORUM" id="P42574"/>
<dbReference type="DIP" id="DIP-268N"/>
<dbReference type="ELM" id="P42574"/>
<dbReference type="FunCoup" id="P42574">
    <property type="interactions" value="4163"/>
</dbReference>
<dbReference type="IntAct" id="P42574">
    <property type="interactions" value="68"/>
</dbReference>
<dbReference type="MINT" id="P42574"/>
<dbReference type="STRING" id="9606.ENSP00000311032"/>
<dbReference type="BindingDB" id="P42574"/>
<dbReference type="ChEMBL" id="CHEMBL2334"/>
<dbReference type="DrugBank" id="DB08498">
    <property type="generic name" value="(1S)-1-(3-chlorophenyl)-2-oxo-2-[(1,3,4-trioxo-1,2,3,4-tetrahydroisoquinolin-5-yl)amino]ethyl acetate"/>
</dbReference>
<dbReference type="DrugBank" id="DB08497">
    <property type="generic name" value="(1S)-2-oxo-1-phenyl-2-[(1,3,4-trioxo-1,2,3,4-tetrahydroisoquinolin-5-yl)amino]ethyl acetate"/>
</dbReference>
<dbReference type="DrugBank" id="DB08213">
    <property type="generic name" value="1-METHYL-5-(2-PHENOXYMETHYL-PYRROLIDINE-1-SULFONYL)-1H-INDOLE-2,3-DIONE"/>
</dbReference>
<dbReference type="DrugBank" id="DB06862">
    <property type="generic name" value="2-HYDROXY-5-(2-MERCAPTO-ETHYLSULFAMOYL)-BENZOIC ACID"/>
</dbReference>
<dbReference type="DrugBank" id="DB08251">
    <property type="generic name" value="4-[5-(2-CARBOXY-1-FORMYL-ETHYLCARBAMOYL)-PYRIDIN-3-YL]-BENZOIC ACID"/>
</dbReference>
<dbReference type="DrugBank" id="DB03124">
    <property type="generic name" value="5-[4-(1-Carboxymethyl-2-Oxo-Propylcarbamoyl)-Benzylsulfamoyl]-2-Hydroxy-Benzoic Acid"/>
</dbReference>
<dbReference type="DrugBank" id="DB08229">
    <property type="generic name" value="[N-(3-dibenzylcarbamoyl-oxiranecarbonyl)-hydrazino]-acetic acid"/>
</dbReference>
<dbReference type="DrugBank" id="DB00945">
    <property type="generic name" value="Acetylsalicylic acid"/>
</dbReference>
<dbReference type="DrugBank" id="DB05408">
    <property type="generic name" value="Emricasan"/>
</dbReference>
<dbReference type="DrugBank" id="DB13751">
    <property type="generic name" value="Glycyrrhizic acid"/>
</dbReference>
<dbReference type="DrugBank" id="DB06255">
    <property type="generic name" value="Incadronic acid"/>
</dbReference>
<dbReference type="DrugBank" id="DB07696">
    <property type="generic name" value="methyl (3S)-3-[(tert-butoxycarbonyl)amino]-4-oxopentanoate"/>
</dbReference>
<dbReference type="DrugBank" id="DB01017">
    <property type="generic name" value="Minocycline"/>
</dbReference>
<dbReference type="DrugBank" id="DB08499">
    <property type="generic name" value="N-[3-(2-fluoroethoxy)phenyl]-N'-(1,3,4-trioxo-1,2,3,4-tetrahydroisoquinolin-6-yl)butanediamide"/>
</dbReference>
<dbReference type="DrugBank" id="DB12843">
    <property type="generic name" value="Oleandrin"/>
</dbReference>
<dbReference type="DrugBank" id="DB13048">
    <property type="generic name" value="PAC-1"/>
</dbReference>
<dbReference type="DrugBank" id="DB00282">
    <property type="generic name" value="Pamidronic acid"/>
</dbReference>
<dbReference type="DrugBank" id="DB12709">
    <property type="generic name" value="Tributyrin"/>
</dbReference>
<dbReference type="DrugCentral" id="P42574"/>
<dbReference type="GuidetoPHARMACOLOGY" id="1619"/>
<dbReference type="MEROPS" id="C14.003"/>
<dbReference type="TCDB" id="8.A.217.1.1">
    <property type="family name" value="the apoptosis cell death regulator (acdr) family"/>
</dbReference>
<dbReference type="GlyGen" id="P42574">
    <property type="glycosylation" value="3 sites, 1 O-linked glycan (1 site)"/>
</dbReference>
<dbReference type="iPTMnet" id="P42574"/>
<dbReference type="MetOSite" id="P42574"/>
<dbReference type="PhosphoSitePlus" id="P42574"/>
<dbReference type="BioMuta" id="CASP3"/>
<dbReference type="DMDM" id="77416852"/>
<dbReference type="OGP" id="P42574"/>
<dbReference type="CPTAC" id="CPTAC-5907"/>
<dbReference type="jPOST" id="P42574"/>
<dbReference type="MassIVE" id="P42574"/>
<dbReference type="PaxDb" id="9606-ENSP00000311032"/>
<dbReference type="PeptideAtlas" id="P42574"/>
<dbReference type="ProteomicsDB" id="55518"/>
<dbReference type="Pumba" id="P42574"/>
<dbReference type="ABCD" id="P42574">
    <property type="antibodies" value="3 sequenced antibodies"/>
</dbReference>
<dbReference type="Antibodypedia" id="1222">
    <property type="antibodies" value="2468 antibodies from 55 providers"/>
</dbReference>
<dbReference type="CPTC" id="P42574">
    <property type="antibodies" value="1 antibody"/>
</dbReference>
<dbReference type="DNASU" id="836"/>
<dbReference type="Ensembl" id="ENST00000308394.9">
    <property type="protein sequence ID" value="ENSP00000311032.4"/>
    <property type="gene ID" value="ENSG00000164305.20"/>
</dbReference>
<dbReference type="Ensembl" id="ENST00000523916.5">
    <property type="protein sequence ID" value="ENSP00000428929.1"/>
    <property type="gene ID" value="ENSG00000164305.20"/>
</dbReference>
<dbReference type="Ensembl" id="ENST00000700100.1">
    <property type="protein sequence ID" value="ENSP00000514797.1"/>
    <property type="gene ID" value="ENSG00000164305.20"/>
</dbReference>
<dbReference type="Ensembl" id="ENST00000700101.1">
    <property type="protein sequence ID" value="ENSP00000514798.1"/>
    <property type="gene ID" value="ENSG00000164305.20"/>
</dbReference>
<dbReference type="GeneID" id="836"/>
<dbReference type="KEGG" id="hsa:836"/>
<dbReference type="MANE-Select" id="ENST00000308394.9">
    <property type="protein sequence ID" value="ENSP00000311032.4"/>
    <property type="RefSeq nucleotide sequence ID" value="NM_004346.4"/>
    <property type="RefSeq protein sequence ID" value="NP_004337.2"/>
</dbReference>
<dbReference type="UCSC" id="uc003iwh.3">
    <property type="organism name" value="human"/>
</dbReference>
<dbReference type="AGR" id="HGNC:1504"/>
<dbReference type="CTD" id="836"/>
<dbReference type="DisGeNET" id="836"/>
<dbReference type="GeneCards" id="CASP3"/>
<dbReference type="HGNC" id="HGNC:1504">
    <property type="gene designation" value="CASP3"/>
</dbReference>
<dbReference type="HPA" id="ENSG00000164305">
    <property type="expression patterns" value="Low tissue specificity"/>
</dbReference>
<dbReference type="MIM" id="600636">
    <property type="type" value="gene"/>
</dbReference>
<dbReference type="neXtProt" id="NX_P42574"/>
<dbReference type="OpenTargets" id="ENSG00000164305"/>
<dbReference type="PharmGKB" id="PA26087"/>
<dbReference type="VEuPathDB" id="HostDB:ENSG00000164305"/>
<dbReference type="eggNOG" id="KOG3573">
    <property type="taxonomic scope" value="Eukaryota"/>
</dbReference>
<dbReference type="GeneTree" id="ENSGT00940000153232"/>
<dbReference type="HOGENOM" id="CLU_036904_2_0_1"/>
<dbReference type="InParanoid" id="P42574"/>
<dbReference type="OMA" id="WHYFTAT"/>
<dbReference type="OrthoDB" id="6116485at2759"/>
<dbReference type="PAN-GO" id="P42574">
    <property type="GO annotations" value="7 GO annotations based on evolutionary models"/>
</dbReference>
<dbReference type="PhylomeDB" id="P42574"/>
<dbReference type="TreeFam" id="TF102023"/>
<dbReference type="BioCyc" id="MetaCyc:HS09058-MONOMER"/>
<dbReference type="BRENDA" id="3.4.22.56">
    <property type="organism ID" value="2681"/>
</dbReference>
<dbReference type="PathwayCommons" id="P42574"/>
<dbReference type="Reactome" id="R-HSA-111459">
    <property type="pathway name" value="Activation of caspases through apoptosome-mediated cleavage"/>
</dbReference>
<dbReference type="Reactome" id="R-HSA-111463">
    <property type="pathway name" value="SMAC (DIABLO) binds to IAPs"/>
</dbReference>
<dbReference type="Reactome" id="R-HSA-111464">
    <property type="pathway name" value="SMAC(DIABLO)-mediated dissociation of IAP:caspase complexes"/>
</dbReference>
<dbReference type="Reactome" id="R-HSA-111465">
    <property type="pathway name" value="Apoptotic cleavage of cellular proteins"/>
</dbReference>
<dbReference type="Reactome" id="R-HSA-111469">
    <property type="pathway name" value="SMAC, XIAP-regulated apoptotic response"/>
</dbReference>
<dbReference type="Reactome" id="R-HSA-140342">
    <property type="pathway name" value="Apoptosis induced DNA fragmentation"/>
</dbReference>
<dbReference type="Reactome" id="R-HSA-1474228">
    <property type="pathway name" value="Degradation of the extracellular matrix"/>
</dbReference>
<dbReference type="Reactome" id="R-HSA-2028269">
    <property type="pathway name" value="Signaling by Hippo"/>
</dbReference>
<dbReference type="Reactome" id="R-HSA-205025">
    <property type="pathway name" value="NADE modulates death signalling"/>
</dbReference>
<dbReference type="Reactome" id="R-HSA-211736">
    <property type="pathway name" value="Stimulation of the cell death response by PAK-2p34"/>
</dbReference>
<dbReference type="Reactome" id="R-HSA-264870">
    <property type="pathway name" value="Caspase-mediated cleavage of cytoskeletal proteins"/>
</dbReference>
<dbReference type="Reactome" id="R-HSA-351906">
    <property type="pathway name" value="Apoptotic cleavage of cell adhesion proteins"/>
</dbReference>
<dbReference type="Reactome" id="R-HSA-418889">
    <property type="pathway name" value="Caspase activation via Dependence Receptors in the absence of ligand"/>
</dbReference>
<dbReference type="Reactome" id="R-HSA-449836">
    <property type="pathway name" value="Other interleukin signaling"/>
</dbReference>
<dbReference type="Reactome" id="R-HSA-5620971">
    <property type="pathway name" value="Pyroptosis"/>
</dbReference>
<dbReference type="SABIO-RK" id="P42574"/>
<dbReference type="SignaLink" id="P42574"/>
<dbReference type="SIGNOR" id="P42574"/>
<dbReference type="STRENDA-DB" id="1XV0MK">
    <property type="experiment" value="Procaspase-3"/>
</dbReference>
<dbReference type="STRENDA-DB" id="M9FKPY">
    <property type="experiment" value="Caspase-3"/>
</dbReference>
<dbReference type="BioGRID-ORCS" id="836">
    <property type="hits" value="19 hits in 1159 CRISPR screens"/>
</dbReference>
<dbReference type="CD-CODE" id="8C2F96ED">
    <property type="entry name" value="Centrosome"/>
</dbReference>
<dbReference type="ChiTaRS" id="CASP3">
    <property type="organism name" value="human"/>
</dbReference>
<dbReference type="EvolutionaryTrace" id="P42574"/>
<dbReference type="GeneWiki" id="Caspase_3"/>
<dbReference type="GenomeRNAi" id="836"/>
<dbReference type="Pharos" id="P42574">
    <property type="development level" value="Tchem"/>
</dbReference>
<dbReference type="PRO" id="PR:P42574"/>
<dbReference type="Proteomes" id="UP000005640">
    <property type="component" value="Chromosome 4"/>
</dbReference>
<dbReference type="RNAct" id="P42574">
    <property type="molecule type" value="protein"/>
</dbReference>
<dbReference type="Bgee" id="ENSG00000164305">
    <property type="expression patterns" value="Expressed in jejunal mucosa and 158 other cell types or tissues"/>
</dbReference>
<dbReference type="ExpressionAtlas" id="P42574">
    <property type="expression patterns" value="baseline and differential"/>
</dbReference>
<dbReference type="GO" id="GO:0005737">
    <property type="term" value="C:cytoplasm"/>
    <property type="evidence" value="ECO:0000314"/>
    <property type="project" value="UniProt"/>
</dbReference>
<dbReference type="GO" id="GO:0005829">
    <property type="term" value="C:cytosol"/>
    <property type="evidence" value="ECO:0000314"/>
    <property type="project" value="UniProtKB"/>
</dbReference>
<dbReference type="GO" id="GO:0031264">
    <property type="term" value="C:death-inducing signaling complex"/>
    <property type="evidence" value="ECO:0000318"/>
    <property type="project" value="GO_Central"/>
</dbReference>
<dbReference type="GO" id="GO:0098978">
    <property type="term" value="C:glutamatergic synapse"/>
    <property type="evidence" value="ECO:0007669"/>
    <property type="project" value="Ensembl"/>
</dbReference>
<dbReference type="GO" id="GO:0043025">
    <property type="term" value="C:neuronal cell body"/>
    <property type="evidence" value="ECO:0007669"/>
    <property type="project" value="Ensembl"/>
</dbReference>
<dbReference type="GO" id="GO:0005654">
    <property type="term" value="C:nucleoplasm"/>
    <property type="evidence" value="ECO:0000304"/>
    <property type="project" value="Reactome"/>
</dbReference>
<dbReference type="GO" id="GO:0005634">
    <property type="term" value="C:nucleus"/>
    <property type="evidence" value="ECO:0000314"/>
    <property type="project" value="UniProtKB"/>
</dbReference>
<dbReference type="GO" id="GO:0014069">
    <property type="term" value="C:postsynaptic density"/>
    <property type="evidence" value="ECO:0007669"/>
    <property type="project" value="Ensembl"/>
</dbReference>
<dbReference type="GO" id="GO:0004190">
    <property type="term" value="F:aspartic-type endopeptidase activity"/>
    <property type="evidence" value="ECO:0007669"/>
    <property type="project" value="Ensembl"/>
</dbReference>
<dbReference type="GO" id="GO:0004861">
    <property type="term" value="F:cyclin-dependent protein serine/threonine kinase inhibitor activity"/>
    <property type="evidence" value="ECO:0007669"/>
    <property type="project" value="Ensembl"/>
</dbReference>
<dbReference type="GO" id="GO:0004197">
    <property type="term" value="F:cysteine-type endopeptidase activity"/>
    <property type="evidence" value="ECO:0000314"/>
    <property type="project" value="UniProtKB"/>
</dbReference>
<dbReference type="GO" id="GO:0005123">
    <property type="term" value="F:death receptor binding"/>
    <property type="evidence" value="ECO:0007669"/>
    <property type="project" value="Ensembl"/>
</dbReference>
<dbReference type="GO" id="GO:0008047">
    <property type="term" value="F:enzyme activator activity"/>
    <property type="evidence" value="ECO:0000318"/>
    <property type="project" value="GO_Central"/>
</dbReference>
<dbReference type="GO" id="GO:0008233">
    <property type="term" value="F:peptidase activity"/>
    <property type="evidence" value="ECO:0000314"/>
    <property type="project" value="UniProtKB"/>
</dbReference>
<dbReference type="GO" id="GO:0016005">
    <property type="term" value="F:phospholipase A2 activator activity"/>
    <property type="evidence" value="ECO:0007669"/>
    <property type="project" value="Ensembl"/>
</dbReference>
<dbReference type="GO" id="GO:0002020">
    <property type="term" value="F:protease binding"/>
    <property type="evidence" value="ECO:0007669"/>
    <property type="project" value="Ensembl"/>
</dbReference>
<dbReference type="GO" id="GO:0044877">
    <property type="term" value="F:protein-containing complex binding"/>
    <property type="evidence" value="ECO:0007669"/>
    <property type="project" value="Ensembl"/>
</dbReference>
<dbReference type="GO" id="GO:0061713">
    <property type="term" value="P:anterior neural tube closure"/>
    <property type="evidence" value="ECO:0007669"/>
    <property type="project" value="Ensembl"/>
</dbReference>
<dbReference type="GO" id="GO:0006915">
    <property type="term" value="P:apoptotic process"/>
    <property type="evidence" value="ECO:0000314"/>
    <property type="project" value="UniProt"/>
</dbReference>
<dbReference type="GO" id="GO:0097190">
    <property type="term" value="P:apoptotic signaling pathway"/>
    <property type="evidence" value="ECO:0000304"/>
    <property type="project" value="BHF-UCL"/>
</dbReference>
<dbReference type="GO" id="GO:0007413">
    <property type="term" value="P:axonal fasciculation"/>
    <property type="evidence" value="ECO:0007669"/>
    <property type="project" value="Ensembl"/>
</dbReference>
<dbReference type="GO" id="GO:0001782">
    <property type="term" value="P:B cell homeostasis"/>
    <property type="evidence" value="ECO:0007669"/>
    <property type="project" value="Ensembl"/>
</dbReference>
<dbReference type="GO" id="GO:0045165">
    <property type="term" value="P:cell fate commitment"/>
    <property type="evidence" value="ECO:0007669"/>
    <property type="project" value="Ensembl"/>
</dbReference>
<dbReference type="GO" id="GO:0072734">
    <property type="term" value="P:cellular response to staurosporine"/>
    <property type="evidence" value="ECO:0000315"/>
    <property type="project" value="CAFA"/>
</dbReference>
<dbReference type="GO" id="GO:0006974">
    <property type="term" value="P:DNA damage response"/>
    <property type="evidence" value="ECO:0007669"/>
    <property type="project" value="Ensembl"/>
</dbReference>
<dbReference type="GO" id="GO:1904019">
    <property type="term" value="P:epithelial cell apoptotic process"/>
    <property type="evidence" value="ECO:0007669"/>
    <property type="project" value="Ensembl"/>
</dbReference>
<dbReference type="GO" id="GO:0030218">
    <property type="term" value="P:erythrocyte differentiation"/>
    <property type="evidence" value="ECO:0000314"/>
    <property type="project" value="UniProtKB"/>
</dbReference>
<dbReference type="GO" id="GO:0097194">
    <property type="term" value="P:execution phase of apoptosis"/>
    <property type="evidence" value="ECO:0000314"/>
    <property type="project" value="UniProtKB"/>
</dbReference>
<dbReference type="GO" id="GO:0044346">
    <property type="term" value="P:fibroblast apoptotic process"/>
    <property type="evidence" value="ECO:0007669"/>
    <property type="project" value="Ensembl"/>
</dbReference>
<dbReference type="GO" id="GO:0034349">
    <property type="term" value="P:glial cell apoptotic process"/>
    <property type="evidence" value="ECO:0007669"/>
    <property type="project" value="Ensembl"/>
</dbReference>
<dbReference type="GO" id="GO:0007507">
    <property type="term" value="P:heart development"/>
    <property type="evidence" value="ECO:0007669"/>
    <property type="project" value="Ensembl"/>
</dbReference>
<dbReference type="GO" id="GO:0021766">
    <property type="term" value="P:hippocampus development"/>
    <property type="evidence" value="ECO:0007669"/>
    <property type="project" value="Ensembl"/>
</dbReference>
<dbReference type="GO" id="GO:0097193">
    <property type="term" value="P:intrinsic apoptotic signaling pathway"/>
    <property type="evidence" value="ECO:0000315"/>
    <property type="project" value="UniProt"/>
</dbReference>
<dbReference type="GO" id="GO:0008627">
    <property type="term" value="P:intrinsic apoptotic signaling pathway in response to osmotic stress"/>
    <property type="evidence" value="ECO:0007669"/>
    <property type="project" value="Ensembl"/>
</dbReference>
<dbReference type="GO" id="GO:0030216">
    <property type="term" value="P:keratinocyte differentiation"/>
    <property type="evidence" value="ECO:0000318"/>
    <property type="project" value="GO_Central"/>
</dbReference>
<dbReference type="GO" id="GO:0007611">
    <property type="term" value="P:learning or memory"/>
    <property type="evidence" value="ECO:0007669"/>
    <property type="project" value="Ensembl"/>
</dbReference>
<dbReference type="GO" id="GO:0071887">
    <property type="term" value="P:leukocyte apoptotic process"/>
    <property type="evidence" value="ECO:0007669"/>
    <property type="project" value="Ensembl"/>
</dbReference>
<dbReference type="GO" id="GO:0001554">
    <property type="term" value="P:luteolysis"/>
    <property type="evidence" value="ECO:0007669"/>
    <property type="project" value="Ensembl"/>
</dbReference>
<dbReference type="GO" id="GO:0046007">
    <property type="term" value="P:negative regulation of activated T cell proliferation"/>
    <property type="evidence" value="ECO:0007669"/>
    <property type="project" value="Ensembl"/>
</dbReference>
<dbReference type="GO" id="GO:0030889">
    <property type="term" value="P:negative regulation of B cell proliferation"/>
    <property type="evidence" value="ECO:0007669"/>
    <property type="project" value="Ensembl"/>
</dbReference>
<dbReference type="GO" id="GO:0045786">
    <property type="term" value="P:negative regulation of cell cycle"/>
    <property type="evidence" value="ECO:0007669"/>
    <property type="project" value="Ensembl"/>
</dbReference>
<dbReference type="GO" id="GO:0001818">
    <property type="term" value="P:negative regulation of cytokine production"/>
    <property type="evidence" value="ECO:0000315"/>
    <property type="project" value="FlyBase"/>
</dbReference>
<dbReference type="GO" id="GO:0051402">
    <property type="term" value="P:neuron apoptotic process"/>
    <property type="evidence" value="ECO:0007669"/>
    <property type="project" value="Ensembl"/>
</dbReference>
<dbReference type="GO" id="GO:0030182">
    <property type="term" value="P:neuron differentiation"/>
    <property type="evidence" value="ECO:0000318"/>
    <property type="project" value="GO_Central"/>
</dbReference>
<dbReference type="GO" id="GO:0048011">
    <property type="term" value="P:neurotrophin TRK receptor signaling pathway"/>
    <property type="evidence" value="ECO:0000314"/>
    <property type="project" value="MGI"/>
</dbReference>
<dbReference type="GO" id="GO:0030220">
    <property type="term" value="P:platelet formation"/>
    <property type="evidence" value="ECO:0000304"/>
    <property type="project" value="UniProtKB"/>
</dbReference>
<dbReference type="GO" id="GO:1902004">
    <property type="term" value="P:positive regulation of amyloid-beta formation"/>
    <property type="evidence" value="ECO:0000314"/>
    <property type="project" value="UniProtKB"/>
</dbReference>
<dbReference type="GO" id="GO:0043525">
    <property type="term" value="P:positive regulation of neuron apoptotic process"/>
    <property type="evidence" value="ECO:0000318"/>
    <property type="project" value="GO_Central"/>
</dbReference>
<dbReference type="GO" id="GO:0140639">
    <property type="term" value="P:positive regulation of pyroptotic inflammatory response"/>
    <property type="evidence" value="ECO:0000314"/>
    <property type="project" value="UniProt"/>
</dbReference>
<dbReference type="GO" id="GO:0030163">
    <property type="term" value="P:protein catabolic process"/>
    <property type="evidence" value="ECO:0000314"/>
    <property type="project" value="UniProt"/>
</dbReference>
<dbReference type="GO" id="GO:0051604">
    <property type="term" value="P:protein maturation"/>
    <property type="evidence" value="ECO:0000314"/>
    <property type="project" value="UniProt"/>
</dbReference>
<dbReference type="GO" id="GO:0016485">
    <property type="term" value="P:protein processing"/>
    <property type="evidence" value="ECO:0000314"/>
    <property type="project" value="UniProt"/>
</dbReference>
<dbReference type="GO" id="GO:0006508">
    <property type="term" value="P:proteolysis"/>
    <property type="evidence" value="ECO:0000314"/>
    <property type="project" value="UniProtKB"/>
</dbReference>
<dbReference type="GO" id="GO:0070269">
    <property type="term" value="P:pyroptotic inflammatory response"/>
    <property type="evidence" value="ECO:0000314"/>
    <property type="project" value="UniProt"/>
</dbReference>
<dbReference type="GO" id="GO:0016241">
    <property type="term" value="P:regulation of macroautophagy"/>
    <property type="evidence" value="ECO:0000304"/>
    <property type="project" value="ParkinsonsUK-UCL"/>
</dbReference>
<dbReference type="GO" id="GO:0031647">
    <property type="term" value="P:regulation of protein stability"/>
    <property type="evidence" value="ECO:0000314"/>
    <property type="project" value="UniProtKB"/>
</dbReference>
<dbReference type="GO" id="GO:0098693">
    <property type="term" value="P:regulation of synaptic vesicle cycle"/>
    <property type="evidence" value="ECO:0007669"/>
    <property type="project" value="Ensembl"/>
</dbReference>
<dbReference type="GO" id="GO:0043200">
    <property type="term" value="P:response to amino acid"/>
    <property type="evidence" value="ECO:0007669"/>
    <property type="project" value="Ensembl"/>
</dbReference>
<dbReference type="GO" id="GO:0072347">
    <property type="term" value="P:response to anesthetic"/>
    <property type="evidence" value="ECO:0007669"/>
    <property type="project" value="Ensembl"/>
</dbReference>
<dbReference type="GO" id="GO:0032025">
    <property type="term" value="P:response to cobalt ion"/>
    <property type="evidence" value="ECO:0007669"/>
    <property type="project" value="Ensembl"/>
</dbReference>
<dbReference type="GO" id="GO:0032355">
    <property type="term" value="P:response to estradiol"/>
    <property type="evidence" value="ECO:0007669"/>
    <property type="project" value="Ensembl"/>
</dbReference>
<dbReference type="GO" id="GO:0051384">
    <property type="term" value="P:response to glucocorticoid"/>
    <property type="evidence" value="ECO:0007669"/>
    <property type="project" value="Ensembl"/>
</dbReference>
<dbReference type="GO" id="GO:0009749">
    <property type="term" value="P:response to glucose"/>
    <property type="evidence" value="ECO:0007669"/>
    <property type="project" value="Ensembl"/>
</dbReference>
<dbReference type="GO" id="GO:0042542">
    <property type="term" value="P:response to hydrogen peroxide"/>
    <property type="evidence" value="ECO:0007669"/>
    <property type="project" value="Ensembl"/>
</dbReference>
<dbReference type="GO" id="GO:0001666">
    <property type="term" value="P:response to hypoxia"/>
    <property type="evidence" value="ECO:0007669"/>
    <property type="project" value="Ensembl"/>
</dbReference>
<dbReference type="GO" id="GO:0032496">
    <property type="term" value="P:response to lipopolysaccharide"/>
    <property type="evidence" value="ECO:0007669"/>
    <property type="project" value="Ensembl"/>
</dbReference>
<dbReference type="GO" id="GO:0035094">
    <property type="term" value="P:response to nicotine"/>
    <property type="evidence" value="ECO:0007669"/>
    <property type="project" value="Ensembl"/>
</dbReference>
<dbReference type="GO" id="GO:0034612">
    <property type="term" value="P:response to tumor necrosis factor"/>
    <property type="evidence" value="ECO:0000304"/>
    <property type="project" value="BHF-UCL"/>
</dbReference>
<dbReference type="GO" id="GO:0009411">
    <property type="term" value="P:response to UV"/>
    <property type="evidence" value="ECO:0007669"/>
    <property type="project" value="Ensembl"/>
</dbReference>
<dbReference type="GO" id="GO:0009611">
    <property type="term" value="P:response to wounding"/>
    <property type="evidence" value="ECO:0007669"/>
    <property type="project" value="Ensembl"/>
</dbReference>
<dbReference type="GO" id="GO:0010165">
    <property type="term" value="P:response to X-ray"/>
    <property type="evidence" value="ECO:0007669"/>
    <property type="project" value="Ensembl"/>
</dbReference>
<dbReference type="GO" id="GO:0009410">
    <property type="term" value="P:response to xenobiotic stimulus"/>
    <property type="evidence" value="ECO:0007669"/>
    <property type="project" value="Ensembl"/>
</dbReference>
<dbReference type="GO" id="GO:0007605">
    <property type="term" value="P:sensory perception of sound"/>
    <property type="evidence" value="ECO:0007669"/>
    <property type="project" value="Ensembl"/>
</dbReference>
<dbReference type="GO" id="GO:0051146">
    <property type="term" value="P:striated muscle cell differentiation"/>
    <property type="evidence" value="ECO:0007669"/>
    <property type="project" value="Ensembl"/>
</dbReference>
<dbReference type="GO" id="GO:0043029">
    <property type="term" value="P:T cell homeostasis"/>
    <property type="evidence" value="ECO:0007669"/>
    <property type="project" value="Ensembl"/>
</dbReference>
<dbReference type="CDD" id="cd00032">
    <property type="entry name" value="CASc"/>
    <property type="match status" value="1"/>
</dbReference>
<dbReference type="FunFam" id="3.40.50.1460:FF:000001">
    <property type="entry name" value="Caspase-3 preproprotein"/>
    <property type="match status" value="1"/>
</dbReference>
<dbReference type="Gene3D" id="3.40.50.1460">
    <property type="match status" value="1"/>
</dbReference>
<dbReference type="InterPro" id="IPR029030">
    <property type="entry name" value="Caspase-like_dom_sf"/>
</dbReference>
<dbReference type="InterPro" id="IPR033139">
    <property type="entry name" value="Caspase_cys_AS"/>
</dbReference>
<dbReference type="InterPro" id="IPR016129">
    <property type="entry name" value="Caspase_his_AS"/>
</dbReference>
<dbReference type="InterPro" id="IPR002398">
    <property type="entry name" value="Pept_C14"/>
</dbReference>
<dbReference type="InterPro" id="IPR011600">
    <property type="entry name" value="Pept_C14_caspase"/>
</dbReference>
<dbReference type="InterPro" id="IPR002138">
    <property type="entry name" value="Pept_C14_p10"/>
</dbReference>
<dbReference type="InterPro" id="IPR001309">
    <property type="entry name" value="Pept_C14_p20"/>
</dbReference>
<dbReference type="InterPro" id="IPR015917">
    <property type="entry name" value="Pept_C14A"/>
</dbReference>
<dbReference type="PANTHER" id="PTHR10454">
    <property type="entry name" value="CASPASE"/>
    <property type="match status" value="1"/>
</dbReference>
<dbReference type="PANTHER" id="PTHR10454:SF198">
    <property type="entry name" value="CASPASE-3"/>
    <property type="match status" value="1"/>
</dbReference>
<dbReference type="Pfam" id="PF00656">
    <property type="entry name" value="Peptidase_C14"/>
    <property type="match status" value="1"/>
</dbReference>
<dbReference type="PRINTS" id="PR00376">
    <property type="entry name" value="IL1BCENZYME"/>
</dbReference>
<dbReference type="SMART" id="SM00115">
    <property type="entry name" value="CASc"/>
    <property type="match status" value="1"/>
</dbReference>
<dbReference type="SUPFAM" id="SSF52129">
    <property type="entry name" value="Caspase-like"/>
    <property type="match status" value="1"/>
</dbReference>
<dbReference type="PROSITE" id="PS01122">
    <property type="entry name" value="CASPASE_CYS"/>
    <property type="match status" value="1"/>
</dbReference>
<dbReference type="PROSITE" id="PS01121">
    <property type="entry name" value="CASPASE_HIS"/>
    <property type="match status" value="1"/>
</dbReference>
<dbReference type="PROSITE" id="PS50207">
    <property type="entry name" value="CASPASE_P10"/>
    <property type="match status" value="1"/>
</dbReference>
<dbReference type="PROSITE" id="PS50208">
    <property type="entry name" value="CASPASE_P20"/>
    <property type="match status" value="1"/>
</dbReference>
<comment type="function">
    <text evidence="3 5 9 10 11 12 13 14 15 16 17 18 19 21 22 23 24 25 27 29">Thiol protease that acts as a major effector caspase involved in the execution phase of apoptosis (PubMed:18723680, PubMed:20566630, PubMed:23650375, PubMed:35338844, PubMed:35446120, PubMed:7596430). Following cleavage and activation by initiator caspases (CASP8, CASP9 and/or CASP10), mediates execution of apoptosis by catalyzing cleavage of many proteins (PubMed:18723680, PubMed:20566630, PubMed:23650375, PubMed:7596430). At the onset of apoptosis, it proteolytically cleaves poly(ADP-ribose) polymerase PARP1 at a '216-Asp-|-Gly-217' bond (PubMed:10497198, PubMed:16374543, PubMed:7596430, PubMed:7774019). Cleaves and activates sterol regulatory element binding proteins (SREBPs) between the basic helix-loop-helix leucine zipper domain and the membrane attachment domain (By similarity). Cleaves and activates caspase-6, -7 and -9 (CASP6, CASP7 and CASP9, respectively) (PubMed:7596430). Cleaves and inactivates interleukin-18 (IL18) (PubMed:37993714, PubMed:9334240). Involved in the cleavage of huntingtin (PubMed:8696339). Triggers cell adhesion in sympathetic neurons through RET cleavage (PubMed:21357690). Cleaves and inhibits serine/threonine-protein kinase AKT1 in response to oxidative stress (PubMed:23152800). Acts as an inhibitor of type I interferon production during virus-induced apoptosis by mediating cleavage of antiviral proteins CGAS, IRF3 and MAVS, thereby preventing cytokine overproduction (PubMed:30878284). Also involved in pyroptosis by mediating cleavage and activation of gasdermin-E (GSDME) (PubMed:35338844, PubMed:35446120). Cleaves XRCC4 and phospholipid scramblase proteins XKR4, XKR8 and XKR9, leading to promote phosphatidylserine exposure on apoptotic cell surface (PubMed:23845944, PubMed:33725486). Cleaves BIRC6 following inhibition of BIRC6-caspase binding by DIABLO/SMAC (PubMed:36758104, PubMed:36758106).</text>
</comment>
<comment type="catalytic activity">
    <reaction evidence="9 10 11 13 14 15 16 17 23 24 29">
        <text>Strict requirement for an Asp residue at positions P1 and P4. It has a preferred cleavage sequence of Asp-Xaa-Xaa-Asp-|- with a hydrophobic amino-acid residue at P2 and a hydrophilic amino-acid residue at P3, although Val or Ala are also accepted at this position.</text>
        <dbReference type="EC" id="3.4.22.56"/>
    </reaction>
</comment>
<comment type="activity regulation">
    <text evidence="6 21 22">Inhibited by isatin sulfonamides (PubMed:10821855). Inhibited by BIRC6; following inhibition of BIRC6-caspase binding by DIABLO/SMAC, BIRC6 is subjected to caspase cleavage, leading to an increase in active caspases (PubMed:36758104, PubMed:36758106).</text>
</comment>
<comment type="subunit">
    <text evidence="8 11">Heterotetramer that consists of two anti-parallel arranged heterodimers, each one formed by a 17 kDa (p17) and a 12 kDa (p12) subunit. Interacts with BIRC6/bruce.</text>
</comment>
<comment type="interaction">
    <interactant intactId="EBI-524064">
        <id>P42574</id>
    </interactant>
    <interactant intactId="EBI-1237481">
        <id>O43823</id>
        <label>AKAP8</label>
    </interactant>
    <organismsDiffer>false</organismsDiffer>
    <experiments>5</experiments>
</comment>
<comment type="interaction">
    <interactant intactId="EBI-524064">
        <id>P42574</id>
    </interactant>
    <interactant intactId="EBI-296115">
        <id>Q9Y243</id>
        <label>AKT3</label>
    </interactant>
    <organismsDiffer>false</organismsDiffer>
    <experiments>2</experiments>
</comment>
<comment type="interaction">
    <interactant intactId="EBI-524064">
        <id>P42574</id>
    </interactant>
    <interactant intactId="EBI-77613">
        <id>P05067</id>
        <label>APP</label>
    </interactant>
    <organismsDiffer>false</organismsDiffer>
    <experiments>4</experiments>
</comment>
<comment type="interaction">
    <interactant intactId="EBI-524064">
        <id>P42574</id>
    </interactant>
    <interactant intactId="EBI-946046">
        <id>P54252</id>
        <label>ATXN3</label>
    </interactant>
    <organismsDiffer>false</organismsDiffer>
    <experiments>9</experiments>
</comment>
<comment type="interaction">
    <interactant intactId="EBI-524064">
        <id>P42574</id>
    </interactant>
    <interactant intactId="EBI-718729">
        <id>P55212</id>
        <label>CASP6</label>
    </interactant>
    <organismsDiffer>false</organismsDiffer>
    <experiments>2</experiments>
</comment>
<comment type="interaction">
    <interactant intactId="EBI-524064">
        <id>P42574</id>
    </interactant>
    <interactant intactId="EBI-516799">
        <id>P55211</id>
        <label>CASP9</label>
    </interactant>
    <organismsDiffer>false</organismsDiffer>
    <experiments>2</experiments>
</comment>
<comment type="interaction">
    <interactant intactId="EBI-524064">
        <id>P42574</id>
    </interactant>
    <interactant intactId="EBI-25840379">
        <id>Q14203-5</id>
        <label>DCTN1</label>
    </interactant>
    <organismsDiffer>false</organismsDiffer>
    <experiments>3</experiments>
</comment>
<comment type="interaction">
    <interactant intactId="EBI-524064">
        <id>P42574</id>
    </interactant>
    <interactant intactId="EBI-466029">
        <id>P42858</id>
        <label>HTT</label>
    </interactant>
    <organismsDiffer>false</organismsDiffer>
    <experiments>9</experiments>
</comment>
<comment type="interaction">
    <interactant intactId="EBI-524064">
        <id>P42574</id>
    </interactant>
    <interactant intactId="EBI-389668">
        <id>Q00987</id>
        <label>MDM2</label>
    </interactant>
    <organismsDiffer>false</organismsDiffer>
    <experiments>2</experiments>
</comment>
<comment type="interaction">
    <interactant intactId="EBI-524064">
        <id>P42574</id>
    </interactant>
    <interactant intactId="EBI-3920273">
        <id>O60551</id>
        <label>NMT2</label>
    </interactant>
    <organismsDiffer>false</organismsDiffer>
    <experiments>2</experiments>
</comment>
<comment type="interaction">
    <interactant intactId="EBI-524064">
        <id>P42574</id>
    </interactant>
    <interactant intactId="EBI-355676">
        <id>P09874</id>
        <label>PARP1</label>
    </interactant>
    <organismsDiffer>false</organismsDiffer>
    <experiments>2</experiments>
</comment>
<comment type="interaction">
    <interactant intactId="EBI-524064">
        <id>P42574</id>
    </interactant>
    <interactant intactId="EBI-12288855">
        <id>Q5JUK2</id>
        <label>SOHLH1</label>
    </interactant>
    <organismsDiffer>false</organismsDiffer>
    <experiments>3</experiments>
</comment>
<comment type="interaction">
    <interactant intactId="EBI-524064">
        <id>P42574</id>
    </interactant>
    <interactant intactId="EBI-594644">
        <id>P10599</id>
        <label>TXN</label>
    </interactant>
    <organismsDiffer>false</organismsDiffer>
    <experiments>6</experiments>
</comment>
<comment type="interaction">
    <interactant intactId="EBI-524064">
        <id>P42574</id>
    </interactant>
    <interactant intactId="EBI-1182602">
        <id>Q9BYP7</id>
        <label>WNK3</label>
    </interactant>
    <organismsDiffer>false</organismsDiffer>
    <experiments>2</experiments>
</comment>
<comment type="interaction">
    <interactant intactId="EBI-524064">
        <id>P42574</id>
    </interactant>
    <interactant intactId="EBI-517127">
        <id>P98170</id>
        <label>XIAP</label>
    </interactant>
    <organismsDiffer>false</organismsDiffer>
    <experiments>6</experiments>
</comment>
<comment type="subcellular location">
    <subcellularLocation>
        <location evidence="7">Cytoplasm</location>
    </subcellularLocation>
</comment>
<comment type="tissue specificity">
    <text evidence="26">Highly expressed in lung, spleen, heart, liver and kidney. Moderate levels in brain and skeletal muscle, and low in testis. Also found in many cell lines, highest expression in cells of the immune system.</text>
</comment>
<comment type="PTM">
    <text evidence="18 19 24 28">Cleavage by granzyme B, caspase-6, caspase-8 and caspase-10 generates the two active subunits (PubMed:35338844, PubMed:35446120, PubMed:7596430, PubMed:8755496). Additional processing of the propeptides is likely due to the autocatalytic activity of the activated protease (PubMed:7596430, PubMed:8755496). Active heterodimers between the small subunit of caspase-7 protease and the large subunit of caspase-3 also occur and vice versa (PubMed:7596430, PubMed:8755496).</text>
</comment>
<comment type="PTM">
    <text evidence="4">S-nitrosylated on its catalytic site cysteine in unstimulated human cell lines and denitrosylated upon activation of the Fas apoptotic pathway, associated with an increase in intracellular caspase activity. Fas therefore activates caspase-3 not only by inducing the cleavage of the caspase zymogen to its active subunits, but also by stimulating the denitrosylation of its active site thiol.</text>
</comment>
<comment type="PTM">
    <text evidence="21 22">Ubiquitinated by BIRC6; this activity is inhibited by DIABLO/SMAC.</text>
</comment>
<comment type="PTM">
    <text evidence="18 19 20">(Microbial infection) ADP-riboxanation by C.violaceum CopC blocks CASP3 processing, preventing CASP3 activation and ability to recognize and cleave substrates.</text>
</comment>
<comment type="similarity">
    <text evidence="36">Belongs to the peptidase C14A family.</text>
</comment>